<proteinExistence type="evidence at protein level"/>
<keyword id="KW-0002">3D-structure</keyword>
<keyword id="KW-0025">Alternative splicing</keyword>
<keyword id="KW-0130">Cell adhesion</keyword>
<keyword id="KW-1003">Cell membrane</keyword>
<keyword id="KW-0217">Developmental protein</keyword>
<keyword id="KW-0221">Differentiation</keyword>
<keyword id="KW-0903">Direct protein sequencing</keyword>
<keyword id="KW-0225">Disease variant</keyword>
<keyword id="KW-1015">Disulfide bond</keyword>
<keyword id="KW-0297">G-protein coupled receptor</keyword>
<keyword id="KW-0325">Glycoprotein</keyword>
<keyword id="KW-0358">Heparin-binding</keyword>
<keyword id="KW-0472">Membrane</keyword>
<keyword id="KW-0524">Neurogenesis</keyword>
<keyword id="KW-1267">Proteomics identification</keyword>
<keyword id="KW-0675">Receptor</keyword>
<keyword id="KW-1185">Reference proteome</keyword>
<keyword id="KW-0964">Secreted</keyword>
<keyword id="KW-0732">Signal</keyword>
<keyword id="KW-0807">Transducer</keyword>
<keyword id="KW-0812">Transmembrane</keyword>
<keyword id="KW-1133">Transmembrane helix</keyword>
<keyword id="KW-0832">Ubl conjugation</keyword>
<evidence type="ECO:0000250" key="1">
    <source>
        <dbReference type="UniProtKB" id="Q8K209"/>
    </source>
</evidence>
<evidence type="ECO:0000255" key="2"/>
<evidence type="ECO:0000255" key="3">
    <source>
        <dbReference type="PROSITE-ProRule" id="PRU00098"/>
    </source>
</evidence>
<evidence type="ECO:0000256" key="4">
    <source>
        <dbReference type="SAM" id="MobiDB-lite"/>
    </source>
</evidence>
<evidence type="ECO:0000269" key="5">
    <source>
    </source>
</evidence>
<evidence type="ECO:0000269" key="6">
    <source>
    </source>
</evidence>
<evidence type="ECO:0000269" key="7">
    <source>
    </source>
</evidence>
<evidence type="ECO:0000269" key="8">
    <source>
    </source>
</evidence>
<evidence type="ECO:0000269" key="9">
    <source>
    </source>
</evidence>
<evidence type="ECO:0000269" key="10">
    <source>
    </source>
</evidence>
<evidence type="ECO:0000269" key="11">
    <source>
    </source>
</evidence>
<evidence type="ECO:0000269" key="12">
    <source>
    </source>
</evidence>
<evidence type="ECO:0000269" key="13">
    <source>
    </source>
</evidence>
<evidence type="ECO:0000269" key="14">
    <source>
    </source>
</evidence>
<evidence type="ECO:0000269" key="15">
    <source>
    </source>
</evidence>
<evidence type="ECO:0000269" key="16">
    <source>
    </source>
</evidence>
<evidence type="ECO:0000269" key="17">
    <source>
    </source>
</evidence>
<evidence type="ECO:0000269" key="18">
    <source>
    </source>
</evidence>
<evidence type="ECO:0000269" key="19">
    <source>
    </source>
</evidence>
<evidence type="ECO:0000269" key="20">
    <source>
    </source>
</evidence>
<evidence type="ECO:0000269" key="21">
    <source>
    </source>
</evidence>
<evidence type="ECO:0000269" key="22">
    <source>
    </source>
</evidence>
<evidence type="ECO:0000269" key="23">
    <source>
    </source>
</evidence>
<evidence type="ECO:0000269" key="24">
    <source>
    </source>
</evidence>
<evidence type="ECO:0000269" key="25">
    <source>
    </source>
</evidence>
<evidence type="ECO:0000269" key="26">
    <source>
    </source>
</evidence>
<evidence type="ECO:0000269" key="27">
    <source>
    </source>
</evidence>
<evidence type="ECO:0000269" key="28">
    <source>
    </source>
</evidence>
<evidence type="ECO:0000269" key="29">
    <source>
    </source>
</evidence>
<evidence type="ECO:0000269" key="30">
    <source>
    </source>
</evidence>
<evidence type="ECO:0000269" key="31">
    <source>
    </source>
</evidence>
<evidence type="ECO:0000269" key="32">
    <source>
    </source>
</evidence>
<evidence type="ECO:0000269" key="33">
    <source>
    </source>
</evidence>
<evidence type="ECO:0000269" key="34">
    <source>
    </source>
</evidence>
<evidence type="ECO:0000269" key="35">
    <source>
    </source>
</evidence>
<evidence type="ECO:0000269" key="36">
    <source>
    </source>
</evidence>
<evidence type="ECO:0000269" key="37">
    <source>
    </source>
</evidence>
<evidence type="ECO:0000269" key="38">
    <source ref="7"/>
</evidence>
<evidence type="ECO:0000303" key="39">
    <source>
    </source>
</evidence>
<evidence type="ECO:0000303" key="40">
    <source>
    </source>
</evidence>
<evidence type="ECO:0000303" key="41">
    <source>
    </source>
</evidence>
<evidence type="ECO:0000303" key="42">
    <source>
    </source>
</evidence>
<evidence type="ECO:0000303" key="43">
    <source>
    </source>
</evidence>
<evidence type="ECO:0000305" key="44"/>
<evidence type="ECO:0000305" key="45">
    <source>
    </source>
</evidence>
<evidence type="ECO:0000312" key="46">
    <source>
        <dbReference type="HGNC" id="HGNC:4512"/>
    </source>
</evidence>
<evidence type="ECO:0007744" key="47">
    <source>
        <dbReference type="PDB" id="7SF8"/>
    </source>
</evidence>
<evidence type="ECO:0007829" key="48">
    <source>
        <dbReference type="PDB" id="7SF8"/>
    </source>
</evidence>
<reference key="1">
    <citation type="journal article" date="1999" name="Genomics">
        <title>GPR56, a novel secretin-like human G-protein-coupled receptor gene.</title>
        <authorList>
            <person name="Liu M."/>
            <person name="Parker R.M.C."/>
            <person name="Darby K."/>
            <person name="Eyre H.J."/>
            <person name="Copeland N.G."/>
            <person name="Crawford J."/>
            <person name="Gilbert D.J."/>
            <person name="Sutherland G.R."/>
            <person name="Jenkins N.A."/>
            <person name="Herzog H."/>
        </authorList>
    </citation>
    <scope>NUCLEOTIDE SEQUENCE [MRNA] (ISOFORM 1)</scope>
    <scope>VARIANTS ARG-281 AND HIS-306</scope>
</reference>
<reference key="2">
    <citation type="journal article" date="1999" name="FEBS Lett.">
        <title>TM7XN1, a novel human EGF-TM7 like protein, detected with mRNA differential display using human melanoma cell lines with different metastatic potential.</title>
        <authorList>
            <person name="Zendman A.J.W."/>
            <person name="Cornelissen I.M.H.A."/>
            <person name="Weidle U.H."/>
            <person name="Ruiter D.J."/>
            <person name="van Muijen G.N.P."/>
        </authorList>
    </citation>
    <scope>NUCLEOTIDE SEQUENCE [MRNA] (ISOFORM 2)</scope>
    <scope>VARIANTS ARG-281 AND HIS-306</scope>
</reference>
<reference key="3">
    <citation type="submission" date="2007-12" db="EMBL/GenBank/DDBJ databases">
        <authorList>
            <person name="Kaighin V.A."/>
            <person name="Martin A.L."/>
            <person name="Aronstam R.S."/>
        </authorList>
    </citation>
    <scope>NUCLEOTIDE SEQUENCE [MRNA] (ISOFORM 1)</scope>
    <source>
        <tissue>Brain</tissue>
    </source>
</reference>
<reference key="4">
    <citation type="journal article" date="2003" name="Genome Res.">
        <title>The secreted protein discovery initiative (SPDI), a large-scale effort to identify novel human secreted and transmembrane proteins: a bioinformatics assessment.</title>
        <authorList>
            <person name="Clark H.F."/>
            <person name="Gurney A.L."/>
            <person name="Abaya E."/>
            <person name="Baker K."/>
            <person name="Baldwin D.T."/>
            <person name="Brush J."/>
            <person name="Chen J."/>
            <person name="Chow B."/>
            <person name="Chui C."/>
            <person name="Crowley C."/>
            <person name="Currell B."/>
            <person name="Deuel B."/>
            <person name="Dowd P."/>
            <person name="Eaton D."/>
            <person name="Foster J.S."/>
            <person name="Grimaldi C."/>
            <person name="Gu Q."/>
            <person name="Hass P.E."/>
            <person name="Heldens S."/>
            <person name="Huang A."/>
            <person name="Kim H.S."/>
            <person name="Klimowski L."/>
            <person name="Jin Y."/>
            <person name="Johnson S."/>
            <person name="Lee J."/>
            <person name="Lewis L."/>
            <person name="Liao D."/>
            <person name="Mark M.R."/>
            <person name="Robbie E."/>
            <person name="Sanchez C."/>
            <person name="Schoenfeld J."/>
            <person name="Seshagiri S."/>
            <person name="Simmons L."/>
            <person name="Singh J."/>
            <person name="Smith V."/>
            <person name="Stinson J."/>
            <person name="Vagts A."/>
            <person name="Vandlen R.L."/>
            <person name="Watanabe C."/>
            <person name="Wieand D."/>
            <person name="Woods K."/>
            <person name="Xie M.-H."/>
            <person name="Yansura D.G."/>
            <person name="Yi S."/>
            <person name="Yu G."/>
            <person name="Yuan J."/>
            <person name="Zhang M."/>
            <person name="Zhang Z."/>
            <person name="Goddard A.D."/>
            <person name="Wood W.I."/>
            <person name="Godowski P.J."/>
            <person name="Gray A.M."/>
        </authorList>
    </citation>
    <scope>NUCLEOTIDE SEQUENCE [LARGE SCALE MRNA] (ISOFORM 1)</scope>
</reference>
<reference key="5">
    <citation type="journal article" date="2004" name="Nat. Genet.">
        <title>Complete sequencing and characterization of 21,243 full-length human cDNAs.</title>
        <authorList>
            <person name="Ota T."/>
            <person name="Suzuki Y."/>
            <person name="Nishikawa T."/>
            <person name="Otsuki T."/>
            <person name="Sugiyama T."/>
            <person name="Irie R."/>
            <person name="Wakamatsu A."/>
            <person name="Hayashi K."/>
            <person name="Sato H."/>
            <person name="Nagai K."/>
            <person name="Kimura K."/>
            <person name="Makita H."/>
            <person name="Sekine M."/>
            <person name="Obayashi M."/>
            <person name="Nishi T."/>
            <person name="Shibahara T."/>
            <person name="Tanaka T."/>
            <person name="Ishii S."/>
            <person name="Yamamoto J."/>
            <person name="Saito K."/>
            <person name="Kawai Y."/>
            <person name="Isono Y."/>
            <person name="Nakamura Y."/>
            <person name="Nagahari K."/>
            <person name="Murakami K."/>
            <person name="Yasuda T."/>
            <person name="Iwayanagi T."/>
            <person name="Wagatsuma M."/>
            <person name="Shiratori A."/>
            <person name="Sudo H."/>
            <person name="Hosoiri T."/>
            <person name="Kaku Y."/>
            <person name="Kodaira H."/>
            <person name="Kondo H."/>
            <person name="Sugawara M."/>
            <person name="Takahashi M."/>
            <person name="Kanda K."/>
            <person name="Yokoi T."/>
            <person name="Furuya T."/>
            <person name="Kikkawa E."/>
            <person name="Omura Y."/>
            <person name="Abe K."/>
            <person name="Kamihara K."/>
            <person name="Katsuta N."/>
            <person name="Sato K."/>
            <person name="Tanikawa M."/>
            <person name="Yamazaki M."/>
            <person name="Ninomiya K."/>
            <person name="Ishibashi T."/>
            <person name="Yamashita H."/>
            <person name="Murakawa K."/>
            <person name="Fujimori K."/>
            <person name="Tanai H."/>
            <person name="Kimata M."/>
            <person name="Watanabe M."/>
            <person name="Hiraoka S."/>
            <person name="Chiba Y."/>
            <person name="Ishida S."/>
            <person name="Ono Y."/>
            <person name="Takiguchi S."/>
            <person name="Watanabe S."/>
            <person name="Yosida M."/>
            <person name="Hotuta T."/>
            <person name="Kusano J."/>
            <person name="Kanehori K."/>
            <person name="Takahashi-Fujii A."/>
            <person name="Hara H."/>
            <person name="Tanase T.-O."/>
            <person name="Nomura Y."/>
            <person name="Togiya S."/>
            <person name="Komai F."/>
            <person name="Hara R."/>
            <person name="Takeuchi K."/>
            <person name="Arita M."/>
            <person name="Imose N."/>
            <person name="Musashino K."/>
            <person name="Yuuki H."/>
            <person name="Oshima A."/>
            <person name="Sasaki N."/>
            <person name="Aotsuka S."/>
            <person name="Yoshikawa Y."/>
            <person name="Matsunawa H."/>
            <person name="Ichihara T."/>
            <person name="Shiohata N."/>
            <person name="Sano S."/>
            <person name="Moriya S."/>
            <person name="Momiyama H."/>
            <person name="Satoh N."/>
            <person name="Takami S."/>
            <person name="Terashima Y."/>
            <person name="Suzuki O."/>
            <person name="Nakagawa S."/>
            <person name="Senoh A."/>
            <person name="Mizoguchi H."/>
            <person name="Goto Y."/>
            <person name="Shimizu F."/>
            <person name="Wakebe H."/>
            <person name="Hishigaki H."/>
            <person name="Watanabe T."/>
            <person name="Sugiyama A."/>
            <person name="Takemoto M."/>
            <person name="Kawakami B."/>
            <person name="Yamazaki M."/>
            <person name="Watanabe K."/>
            <person name="Kumagai A."/>
            <person name="Itakura S."/>
            <person name="Fukuzumi Y."/>
            <person name="Fujimori Y."/>
            <person name="Komiyama M."/>
            <person name="Tashiro H."/>
            <person name="Tanigami A."/>
            <person name="Fujiwara T."/>
            <person name="Ono T."/>
            <person name="Yamada K."/>
            <person name="Fujii Y."/>
            <person name="Ozaki K."/>
            <person name="Hirao M."/>
            <person name="Ohmori Y."/>
            <person name="Kawabata A."/>
            <person name="Hikiji T."/>
            <person name="Kobatake N."/>
            <person name="Inagaki H."/>
            <person name="Ikema Y."/>
            <person name="Okamoto S."/>
            <person name="Okitani R."/>
            <person name="Kawakami T."/>
            <person name="Noguchi S."/>
            <person name="Itoh T."/>
            <person name="Shigeta K."/>
            <person name="Senba T."/>
            <person name="Matsumura K."/>
            <person name="Nakajima Y."/>
            <person name="Mizuno T."/>
            <person name="Morinaga M."/>
            <person name="Sasaki M."/>
            <person name="Togashi T."/>
            <person name="Oyama M."/>
            <person name="Hata H."/>
            <person name="Watanabe M."/>
            <person name="Komatsu T."/>
            <person name="Mizushima-Sugano J."/>
            <person name="Satoh T."/>
            <person name="Shirai Y."/>
            <person name="Takahashi Y."/>
            <person name="Nakagawa K."/>
            <person name="Okumura K."/>
            <person name="Nagase T."/>
            <person name="Nomura N."/>
            <person name="Kikuchi H."/>
            <person name="Masuho Y."/>
            <person name="Yamashita R."/>
            <person name="Nakai K."/>
            <person name="Yada T."/>
            <person name="Nakamura Y."/>
            <person name="Ohara O."/>
            <person name="Isogai T."/>
            <person name="Sugano S."/>
        </authorList>
    </citation>
    <scope>NUCLEOTIDE SEQUENCE [LARGE SCALE MRNA] (ISOFORMS 3 AND 4)</scope>
    <scope>VARIANTS ARG-281 AND HIS-306</scope>
    <source>
        <tissue>Prostate</tissue>
    </source>
</reference>
<reference key="6">
    <citation type="submission" date="2001-07" db="EMBL/GenBank/DDBJ databases">
        <title>Genome-wide discovery and analysis of human seven transmembrane helix receptor genes.</title>
        <authorList>
            <person name="Suwa M."/>
            <person name="Sato T."/>
            <person name="Okouchi I."/>
            <person name="Arita M."/>
            <person name="Futami K."/>
            <person name="Matsumoto S."/>
            <person name="Tsutsumi S."/>
            <person name="Aburatani H."/>
            <person name="Asai K."/>
            <person name="Akiyama Y."/>
        </authorList>
    </citation>
    <scope>NUCLEOTIDE SEQUENCE [GENOMIC DNA]</scope>
</reference>
<reference key="7">
    <citation type="submission" date="2003-05" db="EMBL/GenBank/DDBJ databases">
        <title>Cloning of human full-length CDSs in BD Creator(TM) system donor vector.</title>
        <authorList>
            <person name="Kalnine N."/>
            <person name="Chen X."/>
            <person name="Rolfs A."/>
            <person name="Halleck A."/>
            <person name="Hines L."/>
            <person name="Eisenstein S."/>
            <person name="Koundinya M."/>
            <person name="Raphael J."/>
            <person name="Moreira D."/>
            <person name="Kelley T."/>
            <person name="LaBaer J."/>
            <person name="Lin Y."/>
            <person name="Phelan M."/>
            <person name="Farmer A."/>
        </authorList>
    </citation>
    <scope>NUCLEOTIDE SEQUENCE [LARGE SCALE MRNA] (ISOFORM 1)</scope>
    <scope>VARIANT HIS-306</scope>
</reference>
<reference key="8">
    <citation type="journal article" date="2007" name="BMC Genomics">
        <title>The full-ORF clone resource of the German cDNA consortium.</title>
        <authorList>
            <person name="Bechtel S."/>
            <person name="Rosenfelder H."/>
            <person name="Duda A."/>
            <person name="Schmidt C.P."/>
            <person name="Ernst U."/>
            <person name="Wellenreuther R."/>
            <person name="Mehrle A."/>
            <person name="Schuster C."/>
            <person name="Bahr A."/>
            <person name="Bloecker H."/>
            <person name="Heubner D."/>
            <person name="Hoerlein A."/>
            <person name="Michel G."/>
            <person name="Wedler H."/>
            <person name="Koehrer K."/>
            <person name="Ottenwaelder B."/>
            <person name="Poustka A."/>
            <person name="Wiemann S."/>
            <person name="Schupp I."/>
        </authorList>
    </citation>
    <scope>NUCLEOTIDE SEQUENCE [LARGE SCALE MRNA] (ISOFORM 5)</scope>
    <scope>VARIANT HIS-306</scope>
    <source>
        <tissue>Colon carcinoma</tissue>
    </source>
</reference>
<reference key="9">
    <citation type="journal article" date="2004" name="Nature">
        <title>The sequence and analysis of duplication-rich human chromosome 16.</title>
        <authorList>
            <person name="Martin J."/>
            <person name="Han C."/>
            <person name="Gordon L.A."/>
            <person name="Terry A."/>
            <person name="Prabhakar S."/>
            <person name="She X."/>
            <person name="Xie G."/>
            <person name="Hellsten U."/>
            <person name="Chan Y.M."/>
            <person name="Altherr M."/>
            <person name="Couronne O."/>
            <person name="Aerts A."/>
            <person name="Bajorek E."/>
            <person name="Black S."/>
            <person name="Blumer H."/>
            <person name="Branscomb E."/>
            <person name="Brown N.C."/>
            <person name="Bruno W.J."/>
            <person name="Buckingham J.M."/>
            <person name="Callen D.F."/>
            <person name="Campbell C.S."/>
            <person name="Campbell M.L."/>
            <person name="Campbell E.W."/>
            <person name="Caoile C."/>
            <person name="Challacombe J.F."/>
            <person name="Chasteen L.A."/>
            <person name="Chertkov O."/>
            <person name="Chi H.C."/>
            <person name="Christensen M."/>
            <person name="Clark L.M."/>
            <person name="Cohn J.D."/>
            <person name="Denys M."/>
            <person name="Detter J.C."/>
            <person name="Dickson M."/>
            <person name="Dimitrijevic-Bussod M."/>
            <person name="Escobar J."/>
            <person name="Fawcett J.J."/>
            <person name="Flowers D."/>
            <person name="Fotopulos D."/>
            <person name="Glavina T."/>
            <person name="Gomez M."/>
            <person name="Gonzales E."/>
            <person name="Goodstein D."/>
            <person name="Goodwin L.A."/>
            <person name="Grady D.L."/>
            <person name="Grigoriev I."/>
            <person name="Groza M."/>
            <person name="Hammon N."/>
            <person name="Hawkins T."/>
            <person name="Haydu L."/>
            <person name="Hildebrand C.E."/>
            <person name="Huang W."/>
            <person name="Israni S."/>
            <person name="Jett J."/>
            <person name="Jewett P.B."/>
            <person name="Kadner K."/>
            <person name="Kimball H."/>
            <person name="Kobayashi A."/>
            <person name="Krawczyk M.-C."/>
            <person name="Leyba T."/>
            <person name="Longmire J.L."/>
            <person name="Lopez F."/>
            <person name="Lou Y."/>
            <person name="Lowry S."/>
            <person name="Ludeman T."/>
            <person name="Manohar C.F."/>
            <person name="Mark G.A."/>
            <person name="McMurray K.L."/>
            <person name="Meincke L.J."/>
            <person name="Morgan J."/>
            <person name="Moyzis R.K."/>
            <person name="Mundt M.O."/>
            <person name="Munk A.C."/>
            <person name="Nandkeshwar R.D."/>
            <person name="Pitluck S."/>
            <person name="Pollard M."/>
            <person name="Predki P."/>
            <person name="Parson-Quintana B."/>
            <person name="Ramirez L."/>
            <person name="Rash S."/>
            <person name="Retterer J."/>
            <person name="Ricke D.O."/>
            <person name="Robinson D.L."/>
            <person name="Rodriguez A."/>
            <person name="Salamov A."/>
            <person name="Saunders E.H."/>
            <person name="Scott D."/>
            <person name="Shough T."/>
            <person name="Stallings R.L."/>
            <person name="Stalvey M."/>
            <person name="Sutherland R.D."/>
            <person name="Tapia R."/>
            <person name="Tesmer J.G."/>
            <person name="Thayer N."/>
            <person name="Thompson L.S."/>
            <person name="Tice H."/>
            <person name="Torney D.C."/>
            <person name="Tran-Gyamfi M."/>
            <person name="Tsai M."/>
            <person name="Ulanovsky L.E."/>
            <person name="Ustaszewska A."/>
            <person name="Vo N."/>
            <person name="White P.S."/>
            <person name="Williams A.L."/>
            <person name="Wills P.L."/>
            <person name="Wu J.-R."/>
            <person name="Wu K."/>
            <person name="Yang J."/>
            <person name="DeJong P."/>
            <person name="Bruce D."/>
            <person name="Doggett N.A."/>
            <person name="Deaven L."/>
            <person name="Schmutz J."/>
            <person name="Grimwood J."/>
            <person name="Richardson P."/>
            <person name="Rokhsar D.S."/>
            <person name="Eichler E.E."/>
            <person name="Gilna P."/>
            <person name="Lucas S.M."/>
            <person name="Myers R.M."/>
            <person name="Rubin E.M."/>
            <person name="Pennacchio L.A."/>
        </authorList>
    </citation>
    <scope>NUCLEOTIDE SEQUENCE [LARGE SCALE GENOMIC DNA]</scope>
</reference>
<reference key="10">
    <citation type="submission" date="2005-07" db="EMBL/GenBank/DDBJ databases">
        <authorList>
            <person name="Mural R.J."/>
            <person name="Istrail S."/>
            <person name="Sutton G.G."/>
            <person name="Florea L."/>
            <person name="Halpern A.L."/>
            <person name="Mobarry C.M."/>
            <person name="Lippert R."/>
            <person name="Walenz B."/>
            <person name="Shatkay H."/>
            <person name="Dew I."/>
            <person name="Miller J.R."/>
            <person name="Flanigan M.J."/>
            <person name="Edwards N.J."/>
            <person name="Bolanos R."/>
            <person name="Fasulo D."/>
            <person name="Halldorsson B.V."/>
            <person name="Hannenhalli S."/>
            <person name="Turner R."/>
            <person name="Yooseph S."/>
            <person name="Lu F."/>
            <person name="Nusskern D.R."/>
            <person name="Shue B.C."/>
            <person name="Zheng X.H."/>
            <person name="Zhong F."/>
            <person name="Delcher A.L."/>
            <person name="Huson D.H."/>
            <person name="Kravitz S.A."/>
            <person name="Mouchard L."/>
            <person name="Reinert K."/>
            <person name="Remington K.A."/>
            <person name="Clark A.G."/>
            <person name="Waterman M.S."/>
            <person name="Eichler E.E."/>
            <person name="Adams M.D."/>
            <person name="Hunkapiller M.W."/>
            <person name="Myers E.W."/>
            <person name="Venter J.C."/>
        </authorList>
    </citation>
    <scope>NUCLEOTIDE SEQUENCE [LARGE SCALE GENOMIC DNA]</scope>
</reference>
<reference key="11">
    <citation type="journal article" date="2004" name="Genome Res.">
        <title>The status, quality, and expansion of the NIH full-length cDNA project: the Mammalian Gene Collection (MGC).</title>
        <authorList>
            <consortium name="The MGC Project Team"/>
        </authorList>
    </citation>
    <scope>NUCLEOTIDE SEQUENCE [LARGE SCALE MRNA] (ISOFORM 1)</scope>
    <scope>VARIANT HIS-306</scope>
    <source>
        <tissue>Placenta</tissue>
    </source>
</reference>
<reference key="12">
    <citation type="journal article" date="2004" name="Protein Sci.">
        <title>Signal peptide prediction based on analysis of experimentally verified cleavage sites.</title>
        <authorList>
            <person name="Zhang Z."/>
            <person name="Henzel W.J."/>
        </authorList>
    </citation>
    <scope>PROTEIN SEQUENCE OF 26-40</scope>
</reference>
<reference key="13">
    <citation type="journal article" date="2004" name="Mol. Biol. Cell">
        <title>Dynamic regulation of a GPCR-tetraspanin-G protein complex on intact cells: central role of CD81 in facilitating GPR56-Galpha q/11 association.</title>
        <authorList>
            <person name="Little K.D."/>
            <person name="Hemler M.E."/>
            <person name="Stipp C.S."/>
        </authorList>
    </citation>
    <scope>INTERACTION WITH CD81; CD9 AND GNA11</scope>
</reference>
<reference key="14">
    <citation type="journal article" date="2006" name="Cell">
        <title>Global, in vivo, and site-specific phosphorylation dynamics in signaling networks.</title>
        <authorList>
            <person name="Olsen J.V."/>
            <person name="Blagoev B."/>
            <person name="Gnad F."/>
            <person name="Macek B."/>
            <person name="Kumar C."/>
            <person name="Mortensen P."/>
            <person name="Mann M."/>
        </authorList>
    </citation>
    <scope>IDENTIFICATION BY MASS SPECTROMETRY [LARGE SCALE ANALYSIS]</scope>
    <source>
        <tissue>Cervix carcinoma</tissue>
    </source>
</reference>
<reference key="15">
    <citation type="journal article" date="2006" name="Proc. Natl. Acad. Sci. U.S.A.">
        <title>GPR56, an atypical G protein-coupled receptor, binds tissue transglutaminase, TG2, and inhibits melanoma tumor growth and metastasis.</title>
        <authorList>
            <person name="Xu L."/>
            <person name="Begum S."/>
            <person name="Hearn J.D."/>
            <person name="Hynes R.O."/>
        </authorList>
    </citation>
    <scope>FUNCTION</scope>
    <scope>TISSUE SPECIFICITY</scope>
    <scope>INTERACTION WITH TGM2</scope>
</reference>
<reference key="16">
    <citation type="journal article" date="2010" name="J. Cancer Res. Clin. Oncol.">
        <title>Splicing variants of the orphan G-protein-coupled receptor GPR56 regulate the activity of transcription factors associated with tumorigenesis.</title>
        <authorList>
            <person name="Kim J.E."/>
            <person name="Han J.M."/>
            <person name="Park C.R."/>
            <person name="Shin K.J."/>
            <person name="Ahn C."/>
            <person name="Seong J.Y."/>
            <person name="Hwang J.I."/>
        </authorList>
    </citation>
    <scope>FUNCTION</scope>
    <scope>ALTERNATIVE SPLICING (ISOFORMS 3; 4 AND 5)</scope>
</reference>
<reference key="17">
    <citation type="journal article" date="2011" name="Cancer Res.">
        <title>GPR56 Regulates VEGF production and angiogenesis during melanoma progression.</title>
        <authorList>
            <person name="Yang L."/>
            <person name="Chen G."/>
            <person name="Mohanty S."/>
            <person name="Scott G."/>
            <person name="Fazal F."/>
            <person name="Rahman A."/>
            <person name="Begum S."/>
            <person name="Hynes R.O."/>
            <person name="Xu L."/>
        </authorList>
    </citation>
    <scope>FUNCTION (ADGRG1 N-TERMINAL FRAGMENT AND ADGRG1 C-TERMINAL FRAGMENT)</scope>
    <scope>INTERACTION WITH TGM2</scope>
</reference>
<reference key="18">
    <citation type="journal article" date="2011" name="J. Biol. Chem.">
        <title>Disease-associated GPR56 mutations cause bilateral frontoparietal polymicrogyria via multiple mechanisms.</title>
        <authorList>
            <person name="Chiang N.Y."/>
            <person name="Hsiao C.C."/>
            <person name="Huang Y.S."/>
            <person name="Chen H.Y."/>
            <person name="Hsieh I.J."/>
            <person name="Chang G.W."/>
            <person name="Lin H.H."/>
        </authorList>
    </citation>
    <scope>SUBUNIT</scope>
    <scope>SUBCELLULAR LOCATION (ADGRG1 N-TERMINAL FRAGMENT)</scope>
    <scope>GLYCOSYLATION</scope>
    <scope>CHARACTERIZATION OF VARIANTS CDCBM14A TRP-38; CYS-88; SER-91; SER-346; SER-349; TRP-565 AND ARG-640</scope>
    <scope>MUTAGENESIS OF THR-383</scope>
</reference>
<reference key="19">
    <citation type="journal article" date="2011" name="J. Biol. Chem.">
        <title>The N terminus of the adhesion G protein-coupled receptor GPR56 controls receptor signaling activity.</title>
        <authorList>
            <person name="Paavola K.J."/>
            <person name="Stephenson J.R."/>
            <person name="Ritter S.L."/>
            <person name="Alter S.P."/>
            <person name="Hall R.A."/>
        </authorList>
    </citation>
    <scope>SUBUNIT</scope>
    <scope>UBIQUITINATION</scope>
</reference>
<reference key="20">
    <citation type="journal article" date="2012" name="EMBO J.">
        <title>A novel evolutionarily conserved domain of cell-adhesion GPCRs mediates autoproteolysis.</title>
        <authorList>
            <person name="Arac D."/>
            <person name="Boucard A.A."/>
            <person name="Bolliger M.F."/>
            <person name="Nguyen J."/>
            <person name="Soltis S.M."/>
            <person name="Sudhof T.C."/>
            <person name="Brunger A.T."/>
        </authorList>
    </citation>
    <scope>PROTEOLYTIC PROCESSING</scope>
    <scope>MUTAGENESIS OF HIS-381 AND THR-383</scope>
</reference>
<reference key="21">
    <citation type="journal article" date="2012" name="PLoS ONE">
        <title>Disease-associated mutations prevent GPR56-collagen III interaction.</title>
        <authorList>
            <person name="Luo R."/>
            <person name="Jin Z."/>
            <person name="Deng Y."/>
            <person name="Strokes N."/>
            <person name="Piao X."/>
        </authorList>
    </citation>
    <scope>LIGAND-BINDING</scope>
    <scope>CHARACTERIZATION OF VARIANTS CDCBM14A GLN-38; TRP-38; CYS-88 AND SER-91</scope>
</reference>
<reference key="22">
    <citation type="journal article" date="2014" name="Science">
        <title>Evolutionarily dynamic alternative splicing of GPR56 regulates regional cerebral cortical patterning.</title>
        <authorList>
            <person name="Bae B.I."/>
            <person name="Tietjen I."/>
            <person name="Atabay K.D."/>
            <person name="Evrony G.D."/>
            <person name="Johnson M.B."/>
            <person name="Asare E."/>
            <person name="Wang P.P."/>
            <person name="Murayama A.Y."/>
            <person name="Im K."/>
            <person name="Lisgo S.N."/>
            <person name="Overman L."/>
            <person name="Sestan N."/>
            <person name="Chang B.S."/>
            <person name="Barkovich A.J."/>
            <person name="Grant P.E."/>
            <person name="Topcu M."/>
            <person name="Politsky J."/>
            <person name="Okano H."/>
            <person name="Piao X."/>
            <person name="Walsh C.A."/>
        </authorList>
    </citation>
    <scope>FUNCTION</scope>
    <scope>INVOLVEMENT IN CDCBM14B</scope>
</reference>
<reference key="23">
    <citation type="journal article" date="2015" name="Proc. Natl. Acad. Sci. U.S.A.">
        <title>Adhesion G protein-coupled receptors are activated by exposure of a cryptic tethered agonist.</title>
        <authorList>
            <person name="Stoveken H.M."/>
            <person name="Hajduczok A.G."/>
            <person name="Xu L."/>
            <person name="Tall G.G."/>
        </authorList>
    </citation>
    <scope>ACTIVITY REGULATION</scope>
</reference>
<reference key="24">
    <citation type="journal article" date="2016" name="J. Biol. Chem.">
        <title>Stalk-dependent and stalk-independent signaling by the adhesion G protein-coupled receptors GPR56 (ADGRG1) and BAI1 (ADGRB1).</title>
        <authorList>
            <person name="Kishore A."/>
            <person name="Purcell R.H."/>
            <person name="Nassiri-Toosi Z."/>
            <person name="Hall R.A."/>
        </authorList>
    </citation>
    <scope>MUTAGENESIS OF THR-383</scope>
</reference>
<reference key="25">
    <citation type="journal article" date="2016" name="J. Cell Sci.">
        <title>Heparin interacts with adhesion-GPCR GPR56/ADGRG1, reduces receptor shedding, and promotes cell adhesion and motility.</title>
        <authorList>
            <person name="Chiang N.Y."/>
            <person name="Chang G.W."/>
            <person name="Huang Y.S."/>
            <person name="Peng Y.M."/>
            <person name="Hsiao C.C."/>
            <person name="Kuo M.L."/>
            <person name="Lin H.H."/>
        </authorList>
    </citation>
    <scope>HEPARIN-BINDING DOMAINS</scope>
    <scope>MUTAGENESIS OF HIS-28; ARG-29 AND ARG-33</scope>
</reference>
<reference key="26">
    <citation type="journal article" date="2017" name="J. Biol. Chem.">
        <title>Disease-associated extracellular loop mutations in the adhesion G protein-coupled receptor G1 (ADGRG1; GPR56) differentially regulate downstream signaling.</title>
        <authorList>
            <person name="Kishore A."/>
            <person name="Hall R.A."/>
        </authorList>
    </citation>
    <scope>FUNCTION</scope>
    <scope>SUBCELLULAR LOCATION</scope>
    <scope>CHARACTERIZATION OF VARIANTS CDCBM14A TRP-565 AND ARG-640</scope>
</reference>
<reference key="27">
    <citation type="journal article" date="2017" name="J. Med. Genet.">
        <title>Bi-allelic variants in COL3A1 encoding the ligand to GPR56 are associated with cobblestone-like cortical malformation, white matter changes and cerebellar cysts.</title>
        <authorList>
            <person name="Vandervore L."/>
            <person name="Stouffs K."/>
            <person name="Tanyalcin I."/>
            <person name="Vanderhasselt T."/>
            <person name="Roelens F."/>
            <person name="Holder-Espinasse M."/>
            <person name="Joergensen A."/>
            <person name="Pepin M.G."/>
            <person name="Petit F."/>
            <person name="Khau Van Kien P."/>
            <person name="Bahi-Buisson N."/>
            <person name="Lissens W."/>
            <person name="Gheldof A."/>
            <person name="Byers P.H."/>
            <person name="Jansen A.C."/>
        </authorList>
    </citation>
    <scope>INTERACTION WITH COL3A1</scope>
</reference>
<reference key="28">
    <citation type="journal article" date="2017" name="Proc. Natl. Acad. Sci. U.S.A.">
        <title>Stachel-independent modulation of GPR56/ADGRG1 signaling by synthetic ligands directed to its extracellular region.</title>
        <authorList>
            <person name="Salzman G.S."/>
            <person name="Zhang S."/>
            <person name="Gupta A."/>
            <person name="Koide A."/>
            <person name="Koide S."/>
            <person name="Arac D."/>
        </authorList>
    </citation>
    <scope>FUNCTION</scope>
</reference>
<reference key="29">
    <citation type="journal article" date="2020" name="Proc. Natl. Acad. Sci. U.S.A.">
        <title>GPR56/ADGRG1 is a platelet collagen-responsive GPCR and hemostatic sensor of shear force.</title>
        <authorList>
            <person name="Yeung J."/>
            <person name="Adili R."/>
            <person name="Stringham E.N."/>
            <person name="Luo R."/>
            <person name="Vizurraga A."/>
            <person name="Rosselli-Murai L.K."/>
            <person name="Stoveken H.M."/>
            <person name="Yu M."/>
            <person name="Piao X."/>
            <person name="Holinstat M."/>
            <person name="Tall G.G."/>
        </authorList>
    </citation>
    <scope>FUNCTION</scope>
</reference>
<reference key="30">
    <citation type="journal article" date="2023" name="J. Biol. Chem.">
        <title>GPR114/ADGRG5 is activated by its tethered peptide agonist because it is a cleaved adhesion GPCR.</title>
        <authorList>
            <person name="Bernadyn T.F."/>
            <person name="Vizurraga A."/>
            <person name="Adhikari R."/>
            <person name="Kwarcinski F."/>
            <person name="Tall G.G."/>
        </authorList>
    </citation>
    <scope>PROTEOLYTIC CLEAVAGE</scope>
    <scope>MUTAGENESIS OF ALA-386</scope>
</reference>
<reference key="31">
    <citation type="journal article" date="2024" name="Cell Metab.">
        <title>Sensing steroid hormone 17alpha-hydroxypregnenolone by GPR56 enables protection from ferroptosis-induced liver injury.</title>
        <authorList>
            <person name="Lin H."/>
            <person name="Ma C."/>
            <person name="Zhuang X."/>
            <person name="Liu S."/>
            <person name="Liu D."/>
            <person name="Zhang M."/>
            <person name="Lu Y."/>
            <person name="Zhou G."/>
            <person name="Zhang C."/>
            <person name="Wang T."/>
            <person name="Zhang Z."/>
            <person name="Lv L."/>
            <person name="Zhang D."/>
            <person name="Ruan X.Z."/>
            <person name="Xu Y."/>
            <person name="Chai R."/>
            <person name="Yu X."/>
            <person name="Sun J.P."/>
            <person name="Chu B."/>
        </authorList>
    </citation>
    <scope>FUNCTION</scope>
    <scope>MUTAGENESIS OF LEU-482; LEU-486; TRP-563; SER-570; TYR-571; ASN-574; TRP-623 AND PHE-643</scope>
</reference>
<reference evidence="47" key="32">
    <citation type="journal article" date="2022" name="Nature">
        <title>The tethered peptide activation mechanism of adhesion GPCRs.</title>
        <authorList>
            <person name="Barros-Alvarez X."/>
            <person name="Nwokonko R.M."/>
            <person name="Vizurraga A."/>
            <person name="Matzov D."/>
            <person name="He F."/>
            <person name="Papasergi-Scott M.M."/>
            <person name="Robertson M.J."/>
            <person name="Panova O."/>
            <person name="Yardeni E.H."/>
            <person name="Seven A.B."/>
            <person name="Kwarcinski F.E."/>
            <person name="Su H."/>
            <person name="Peroto M.C."/>
            <person name="Meyerowitz J.G."/>
            <person name="Shalev-Benami M."/>
            <person name="Tall G.G."/>
            <person name="Skiniotis G."/>
        </authorList>
    </citation>
    <scope>STRUCTURE BY ELECTRON MICROSCOPY (2.70 ANGSTROMS) OF 383-693 IN COMPLEX WITH GNA13; GNB1 AND GNG2</scope>
    <scope>FUNCTION</scope>
    <scope>ACTIVITY REGULATION</scope>
    <scope>DOMAIN</scope>
    <scope>DISULFIDE BONDS</scope>
    <scope>MUTAGENESIS OF TYR-384; PHE-385; MET-389; PHE-454; TRP-563; TRP-623 AND PHE-643</scope>
</reference>
<reference key="33">
    <citation type="journal article" date="2004" name="Science">
        <title>G protein-coupled receptor-dependent development of human frontal cortex.</title>
        <authorList>
            <person name="Piao X."/>
            <person name="Hill R.S."/>
            <person name="Bodell A."/>
            <person name="Chang B.S."/>
            <person name="Basel-Vanagaite L."/>
            <person name="Straussberg R."/>
            <person name="Dobyns W.B."/>
            <person name="Qasrawi B."/>
            <person name="Winter R.M."/>
            <person name="Innes A.M."/>
            <person name="Voit T."/>
            <person name="Ross M.E."/>
            <person name="Michaud J.L."/>
            <person name="Descarie J.-C."/>
            <person name="Barkovich A.J."/>
            <person name="Walsh C.A."/>
        </authorList>
    </citation>
    <scope>VARIANTS CDCBM14A TRP-38; CYS-88; SER-91; SER-346 AND TRP-565</scope>
</reference>
<reference key="34">
    <citation type="journal article" date="2005" name="Ann. Neurol.">
        <title>Genotype-phenotype analysis of human frontoparietal polymicrogyria syndromes.</title>
        <authorList>
            <person name="Piao X."/>
            <person name="Chang B.S."/>
            <person name="Bodell A."/>
            <person name="Woods K."/>
            <person name="Benzeev B."/>
            <person name="Topcu M."/>
            <person name="Guerrini R."/>
            <person name="Goldberg-Stern H."/>
            <person name="Sztriha L."/>
            <person name="Dobyns W.B."/>
            <person name="Barkovich A.J."/>
            <person name="Walsh C.A."/>
        </authorList>
    </citation>
    <scope>VARIANTS CDCBM14A GLN-38; TRP-38; SER-349; TRP-565 AND ARG-640</scope>
</reference>
<reference key="35">
    <citation type="journal article" date="2011" name="Pediatr. Neurol.">
        <title>A novel GPR56 mutation causes bilateral frontoparietal polymicrogyria.</title>
        <authorList>
            <person name="Luo R."/>
            <person name="Yang H.M."/>
            <person name="Jin Z."/>
            <person name="Halley D.J."/>
            <person name="Chang B.S."/>
            <person name="MacPherson L."/>
            <person name="Brueton L."/>
            <person name="Piao X."/>
        </authorList>
    </citation>
    <scope>VARIANT CDCBM14A LYS-496</scope>
    <scope>CHARACTERIZATION OF VARIANT CDCBM14A LYS-496</scope>
</reference>
<reference key="36">
    <citation type="journal article" date="2014" name="PLoS ONE">
        <title>Mechanism for adhesion G protein-coupled receptor GPR56-mediated RhoA activation induced by collagen III stimulation.</title>
        <authorList>
            <person name="Luo R."/>
            <person name="Jeong S.J."/>
            <person name="Yang A."/>
            <person name="Wen M."/>
            <person name="Saslowsky D.E."/>
            <person name="Lencer W.I."/>
            <person name="Arac D."/>
            <person name="Piao X."/>
        </authorList>
    </citation>
    <scope>CHARACTERIZATION OF VARIANT CDCBM14A ARG-640</scope>
    <scope>LIGAND-BINDING</scope>
    <scope>SUBCELLULAR LOCATION</scope>
</reference>
<reference key="37">
    <citation type="journal article" date="2018" name="Turk. J. Pediatr.">
        <title>GPR56 homozygous nonsense mutation p.R271* associated with phenotypic variability in bilateral frontoparietal polymicrogyria.</title>
        <authorList>
            <person name="Oencue-Oener T."/>
            <person name="Uenalp A."/>
            <person name="Porsuk-Doru I."/>
            <person name="Agilkaya S."/>
            <person name="Gueleryuez H."/>
            <person name="Sarac A."/>
            <person name="Erguener B."/>
            <person name="Yueksel B."/>
            <person name="Hiz-Kurul S."/>
            <person name="Cingoez S."/>
        </authorList>
    </citation>
    <scope>VARIANT CDCBM14A 271-ARG--ILE-693 DEL</scope>
</reference>
<reference key="38">
    <citation type="journal article" date="2018" name="J. Pediatr. Genet.">
        <title>Three Mutations in the Bilateral Frontoparietal Polymicrogyria Gene GPR56 in Pakistani Intellectual Disability Families.</title>
        <authorList>
            <person name="Sawal H.A."/>
            <person name="Harripaul R."/>
            <person name="Mikhailov A."/>
            <person name="Vleuten K."/>
            <person name="Naeem F."/>
            <person name="Nasr T."/>
            <person name="Hassan M.J."/>
            <person name="Vincent J.B."/>
            <person name="Ayub M."/>
            <person name="Rafiq M.A."/>
        </authorList>
    </citation>
    <scope>VARIANTS CDCBM14A 476-ARG--ILE-693 DEL AND PRO-487</scope>
</reference>
<reference key="39">
    <citation type="journal article" date="2021" name="Front. Pediatr.">
        <title>Case Report: diffuse polymicrogyria associated with a novel ADGRG1 variant.</title>
        <authorList>
            <person name="Carneiro F."/>
            <person name="Duarte J."/>
            <person name="Laranjeira F."/>
            <person name="Barbosa-Gouveia S."/>
            <person name="Couce M.L."/>
            <person name="Fonseca M.J."/>
        </authorList>
    </citation>
    <scope>VARIANT CDCBM14A 502-ARG--ILE-693 DEL</scope>
</reference>
<reference key="40">
    <citation type="journal article" date="2023" name="Epilepsia Open">
        <title>Identification and clinical characteristics of a novel missense ADGRG1 variant in bilateral frontoparietal polymicrogyria: The electroclinical change from infancy to adulthood after Callosotomy in three siblings.</title>
        <authorList>
            <person name="Kuo C.Y."/>
            <person name="Tsai M.H."/>
            <person name="Lin H.H."/>
            <person name="Wang Y.C."/>
            <person name="Singh A.K."/>
            <person name="Chang C.C."/>
            <person name="Lin J.J."/>
            <person name="Hung P.C."/>
            <person name="Lin K.L."/>
        </authorList>
    </citation>
    <scope>VARIANT CDCBM14A PRO-290</scope>
</reference>
<organism>
    <name type="scientific">Homo sapiens</name>
    <name type="common">Human</name>
    <dbReference type="NCBI Taxonomy" id="9606"/>
    <lineage>
        <taxon>Eukaryota</taxon>
        <taxon>Metazoa</taxon>
        <taxon>Chordata</taxon>
        <taxon>Craniata</taxon>
        <taxon>Vertebrata</taxon>
        <taxon>Euteleostomi</taxon>
        <taxon>Mammalia</taxon>
        <taxon>Eutheria</taxon>
        <taxon>Euarchontoglires</taxon>
        <taxon>Primates</taxon>
        <taxon>Haplorrhini</taxon>
        <taxon>Catarrhini</taxon>
        <taxon>Hominidae</taxon>
        <taxon>Homo</taxon>
    </lineage>
</organism>
<feature type="signal peptide" evidence="10">
    <location>
        <begin position="1"/>
        <end position="25"/>
    </location>
</feature>
<feature type="chain" id="PRO_0000012880" description="Adhesion G-protein coupled receptor G1">
    <location>
        <begin position="26"/>
        <end position="693"/>
    </location>
</feature>
<feature type="chain" id="PRO_0000423086" description="Adhesion G-protein coupled receptor G1, N-terminal fragment" evidence="45">
    <location>
        <begin position="26"/>
        <end position="382" status="uncertain"/>
    </location>
</feature>
<feature type="chain" id="PRO_0000423087" description="Adhesion G-protein coupled receptor G1, C-terminal fragment" evidence="45">
    <location>
        <begin position="383" status="uncertain"/>
        <end position="693"/>
    </location>
</feature>
<feature type="topological domain" description="Extracellular" evidence="34 47">
    <location>
        <begin position="26"/>
        <end position="401"/>
    </location>
</feature>
<feature type="transmembrane region" description="Helical; Name=1" evidence="34 47">
    <location>
        <begin position="402"/>
        <end position="424"/>
    </location>
</feature>
<feature type="topological domain" description="Cytoplasmic" evidence="34 47">
    <location>
        <begin position="425"/>
        <end position="437"/>
    </location>
</feature>
<feature type="transmembrane region" description="Helical; Name=2" evidence="34 47">
    <location>
        <begin position="438"/>
        <end position="460"/>
    </location>
</feature>
<feature type="topological domain" description="Extracellular" evidence="34 47">
    <location>
        <begin position="461"/>
        <end position="465"/>
    </location>
</feature>
<feature type="transmembrane region" description="Helical; Name=3" evidence="34 47">
    <location>
        <begin position="466"/>
        <end position="495"/>
    </location>
</feature>
<feature type="topological domain" description="Cytoplasmic" evidence="34 47">
    <location>
        <begin position="496"/>
        <end position="510"/>
    </location>
</feature>
<feature type="transmembrane region" description="Helical; Name=4" evidence="34 47">
    <location>
        <begin position="511"/>
        <end position="533"/>
    </location>
</feature>
<feature type="topological domain" description="Extracellular" evidence="34 47">
    <location>
        <begin position="534"/>
        <end position="562"/>
    </location>
</feature>
<feature type="transmembrane region" description="Helical; Name=5" evidence="34 47">
    <location>
        <begin position="563"/>
        <end position="588"/>
    </location>
</feature>
<feature type="topological domain" description="Cytoplasmic" evidence="34 47">
    <location>
        <begin position="589"/>
        <end position="602"/>
    </location>
</feature>
<feature type="transmembrane region" description="Helical; Name=6" evidence="34 47">
    <location>
        <begin position="603"/>
        <end position="624"/>
    </location>
</feature>
<feature type="topological domain" description="Extracellular" evidence="34 47">
    <location>
        <begin position="625"/>
        <end position="628"/>
    </location>
</feature>
<feature type="transmembrane region" description="Helical; Name=7" evidence="34 47">
    <location>
        <begin position="629"/>
        <end position="654"/>
    </location>
</feature>
<feature type="topological domain" description="Cytoplasmic" evidence="34 47">
    <location>
        <begin position="655"/>
        <end position="693"/>
    </location>
</feature>
<feature type="domain" description="GAIN-B" evidence="3">
    <location>
        <begin position="224"/>
        <end position="395"/>
    </location>
</feature>
<feature type="region of interest" description="GPS" evidence="3">
    <location>
        <begin position="346"/>
        <end position="395"/>
    </location>
</feature>
<feature type="region of interest" description="Stachel" evidence="34">
    <location>
        <begin position="384"/>
        <end position="397"/>
    </location>
</feature>
<feature type="region of interest" description="Disordered" evidence="4">
    <location>
        <begin position="670"/>
        <end position="693"/>
    </location>
</feature>
<feature type="compositionally biased region" description="Low complexity" evidence="4">
    <location>
        <begin position="684"/>
        <end position="693"/>
    </location>
</feature>
<feature type="binding site" evidence="26">
    <location>
        <begin position="26"/>
        <end position="33"/>
    </location>
    <ligand>
        <name>heparin</name>
        <dbReference type="ChEBI" id="CHEBI:28304"/>
    </ligand>
</feature>
<feature type="binding site" evidence="26">
    <location>
        <begin position="190"/>
        <end position="200"/>
    </location>
    <ligand>
        <name>heparin</name>
        <dbReference type="ChEBI" id="CHEBI:28304"/>
    </ligand>
</feature>
<feature type="site" description="Cleavage; by autolysis" evidence="3 45">
    <location>
        <begin position="382"/>
        <end position="383"/>
    </location>
</feature>
<feature type="glycosylation site" description="N-linked (GlcNAc...) asparagine" evidence="2">
    <location>
        <position position="39"/>
    </location>
</feature>
<feature type="glycosylation site" description="N-linked (GlcNAc...) asparagine" evidence="2">
    <location>
        <position position="148"/>
    </location>
</feature>
<feature type="glycosylation site" description="N-linked (GlcNAc...) asparagine" evidence="2">
    <location>
        <position position="171"/>
    </location>
</feature>
<feature type="glycosylation site" description="N-linked (GlcNAc...) asparagine" evidence="2">
    <location>
        <position position="234"/>
    </location>
</feature>
<feature type="glycosylation site" description="N-linked (GlcNAc...) asparagine" evidence="2">
    <location>
        <position position="303"/>
    </location>
</feature>
<feature type="glycosylation site" description="N-linked (GlcNAc...) asparagine" evidence="2">
    <location>
        <position position="324"/>
    </location>
</feature>
<feature type="glycosylation site" description="N-linked (GlcNAc...) asparagine" evidence="2">
    <location>
        <position position="341"/>
    </location>
</feature>
<feature type="disulfide bond" evidence="1">
    <location>
        <begin position="35"/>
        <end position="91"/>
    </location>
</feature>
<feature type="disulfide bond" evidence="1">
    <location>
        <begin position="121"/>
        <end position="177"/>
    </location>
</feature>
<feature type="disulfide bond" evidence="3">
    <location>
        <begin position="346"/>
        <end position="377"/>
    </location>
</feature>
<feature type="disulfide bond" evidence="3">
    <location>
        <begin position="366"/>
        <end position="379"/>
    </location>
</feature>
<feature type="disulfide bond" evidence="34 47">
    <location>
        <begin position="475"/>
        <end position="562"/>
    </location>
</feature>
<feature type="splice variant" id="VSP_047554" description="In isoform 5." evidence="42">
    <location>
        <begin position="1"/>
        <end position="175"/>
    </location>
</feature>
<feature type="splice variant" id="VSP_047555" description="In isoform 3." evidence="41">
    <original>Q</original>
    <variation>QASASS</variation>
    <location>
        <position position="21"/>
    </location>
</feature>
<feature type="splice variant" id="VSP_047556" description="In isoform 4." evidence="41">
    <location>
        <begin position="38"/>
        <end position="207"/>
    </location>
</feature>
<feature type="splice variant" id="VSP_035068" description="In isoform 2 and isoform 3." evidence="40 41">
    <location>
        <begin position="429"/>
        <end position="434"/>
    </location>
</feature>
<feature type="sequence variant" id="VAR_069581" description="In CDCBM14A; abolishes interaction with COL3A1; dbSNP:rs764367185." evidence="12 20">
    <original>R</original>
    <variation>Q</variation>
    <location>
        <position position="38"/>
    </location>
</feature>
<feature type="sequence variant" id="VAR_026242" description="In CDCBM14A; abolishes interaction with COL3A1; reduces cell surface localization; dbSNP:rs121908462." evidence="9 12 16 20">
    <original>R</original>
    <variation>W</variation>
    <location>
        <position position="38"/>
    </location>
</feature>
<feature type="sequence variant" id="VAR_026243" description="In CDCBM14A; abolishes interaction with COL3A1; reduces cell surface localization; dbSNP:rs121908466." evidence="9 16 20">
    <original>Y</original>
    <variation>C</variation>
    <location>
        <position position="88"/>
    </location>
</feature>
<feature type="sequence variant" id="VAR_026244" description="In CDCBM14A; abolishes interaction with COL3A1; reduces cell surface localization; dbSNP:rs121908465." evidence="9 16 20">
    <original>C</original>
    <variation>S</variation>
    <location>
        <position position="91"/>
    </location>
</feature>
<feature type="sequence variant" id="VAR_090386" description="In CDCBM14A." evidence="31">
    <location>
        <begin position="271"/>
        <end position="693"/>
    </location>
</feature>
<feature type="sequence variant" id="VAR_017910" description="In dbSNP:rs1801257." evidence="5 6 7">
    <original>S</original>
    <variation>R</variation>
    <location>
        <position position="281"/>
    </location>
</feature>
<feature type="sequence variant" id="VAR_090387" description="In CDCBM14A." evidence="35">
    <original>L</original>
    <variation>P</variation>
    <location>
        <position position="290"/>
    </location>
</feature>
<feature type="sequence variant" id="VAR_017911" description="In dbSNP:rs1801255." evidence="5 6 7 11 14 38">
    <original>Q</original>
    <variation>H</variation>
    <location>
        <position position="306"/>
    </location>
</feature>
<feature type="sequence variant" id="VAR_026245" description="In CDCBM14A; abolishes autoproteolytic cleavage; reduces cell surface localization; dbSNP:rs121908463." evidence="9 16">
    <original>C</original>
    <variation>S</variation>
    <location>
        <position position="346"/>
    </location>
</feature>
<feature type="sequence variant" id="VAR_069582" description="In CDCBM14A; abolishes autoproteolytic cleavage; reduces cell surface localization." evidence="12 16">
    <original>W</original>
    <variation>S</variation>
    <location>
        <position position="349"/>
    </location>
</feature>
<feature type="sequence variant" id="VAR_090388" description="In CDCBM14A; uncertain significance." evidence="30">
    <location>
        <begin position="476"/>
        <end position="693"/>
    </location>
</feature>
<feature type="sequence variant" id="VAR_090389" description="In CDCBM14A; uncertain significance." evidence="30">
    <original>L</original>
    <variation>P</variation>
    <location>
        <position position="487"/>
    </location>
</feature>
<feature type="sequence variant" id="VAR_049457" description="In dbSNP:rs17379472.">
    <original>M</original>
    <variation>T</variation>
    <location>
        <position position="493"/>
    </location>
</feature>
<feature type="sequence variant" id="VAR_069583" description="In CDCBM14A; reduces cell surface localization; dbSNP:rs556518689." evidence="18">
    <original>E</original>
    <variation>K</variation>
    <location>
        <position position="496"/>
    </location>
</feature>
<feature type="sequence variant" id="VAR_090390" description="In CDCBM14A." evidence="33">
    <location>
        <begin position="502"/>
        <end position="693"/>
    </location>
</feature>
<feature type="sequence variant" id="VAR_049458" description="In dbSNP:rs16958679.">
    <original>P</original>
    <variation>L</variation>
    <location>
        <position position="527"/>
    </location>
</feature>
<feature type="sequence variant" id="VAR_026246" description="In CDCBM14A; reduces cell surface localization; reduced G protein-coupled receptor activity; dbSNP:rs121908464." evidence="9 12 16 28">
    <original>R</original>
    <variation>W</variation>
    <location>
        <position position="565"/>
    </location>
</feature>
<feature type="sequence variant" id="VAR_069584" description="In CDCBM14A; unclear effects on cell surface localization; blocks downstream RhoA activation; reduced G protein-coupled receptor activity." evidence="12 16 23 28">
    <original>L</original>
    <variation>R</variation>
    <location>
        <position position="640"/>
    </location>
</feature>
<feature type="mutagenesis site" description="Abolishes heparin-binding; when associated with A-29 and A-33." evidence="26">
    <original>H</original>
    <variation>A</variation>
    <location>
        <position position="28"/>
    </location>
</feature>
<feature type="mutagenesis site" description="Abolishes heparin-binding; when associated with A-28 and A-33." evidence="26">
    <original>R</original>
    <variation>A</variation>
    <location>
        <position position="29"/>
    </location>
</feature>
<feature type="mutagenesis site" description="Reduces heparin-binding. Abolishes heparin-binding; when associated with A-28 and A-29." evidence="26">
    <original>R</original>
    <variation>A</variation>
    <location>
        <position position="33"/>
    </location>
</feature>
<feature type="mutagenesis site" description="Abolishes cleavage." evidence="21">
    <original>H</original>
    <variation>S</variation>
    <location>
        <position position="381"/>
    </location>
</feature>
<feature type="mutagenesis site" description="Abolishes cleavage but does not affect cell membrane localization or signaling activity." evidence="16 21 25">
    <original>T</original>
    <variation>G</variation>
    <location>
        <position position="383"/>
    </location>
</feature>
<feature type="mutagenesis site" description="Strongly decreased G protein-coupled receptor activity." evidence="34">
    <original>Y</original>
    <variation>A</variation>
    <location>
        <position position="384"/>
    </location>
</feature>
<feature type="mutagenesis site" description="Strongly decreased G protein-coupled receptor activity." evidence="34">
    <original>F</original>
    <variation>A</variation>
    <location>
        <position position="385"/>
    </location>
</feature>
<feature type="mutagenesis site" description="Impaired G protein-coupled receptor activity." evidence="36">
    <original>A</original>
    <variation>M</variation>
    <location>
        <position position="386"/>
    </location>
</feature>
<feature type="mutagenesis site" description="Abolished G protein-coupled receptor activity." evidence="34">
    <original>M</original>
    <variation>A</variation>
    <location>
        <position position="389"/>
    </location>
</feature>
<feature type="mutagenesis site" description="Strongly decreased G protein-coupled receptor activity." evidence="34">
    <original>F</original>
    <variation>A</variation>
    <location>
        <position position="454"/>
    </location>
</feature>
<feature type="mutagenesis site" description="Impaired G protein-coupled receptor activity in response to 17alpha-hydroxypregnenolone-binding." evidence="37">
    <original>L</original>
    <variation>A</variation>
    <location>
        <position position="482"/>
    </location>
</feature>
<feature type="mutagenesis site" description="Impaired G protein-coupled receptor activity in response to 17alpha-hydroxypregnenolone-binding." evidence="37">
    <original>L</original>
    <variation>A</variation>
    <location>
        <position position="486"/>
    </location>
</feature>
<feature type="mutagenesis site" description="Impaired G protein-coupled receptor activity in response to 17alpha-hydroxypregnenolone-binding." evidence="34 37">
    <original>W</original>
    <variation>A</variation>
    <location>
        <position position="563"/>
    </location>
</feature>
<feature type="mutagenesis site" description="Impaired G protein-coupled receptor activity in response to 17alpha-hydroxypregnenolone-binding." evidence="37">
    <original>S</original>
    <variation>A</variation>
    <variation>V</variation>
    <location>
        <position position="570"/>
    </location>
</feature>
<feature type="mutagenesis site" description="Impaired G protein-coupled receptor activity in response to 17alpha-hydroxypregnenolone-binding." evidence="37">
    <original>Y</original>
    <variation>F</variation>
    <location>
        <position position="571"/>
    </location>
</feature>
<feature type="mutagenesis site" description="Impaired G protein-coupled receptor activity in response to 17alpha-hydroxypregnenolone-binding." evidence="37">
    <original>N</original>
    <variation>A</variation>
    <location>
        <position position="574"/>
    </location>
</feature>
<feature type="mutagenesis site" description="Impaired G protein-coupled receptor activity in response to 17alpha-hydroxypregnenolone-binding." evidence="34 37">
    <original>W</original>
    <variation>A</variation>
    <location>
        <position position="623"/>
    </location>
</feature>
<feature type="mutagenesis site" description="Impaired G protein-coupled receptor activity in response to 17alpha-hydroxypregnenolone-binding." evidence="34 37">
    <original>F</original>
    <variation>A</variation>
    <location>
        <position position="643"/>
    </location>
</feature>
<feature type="sequence conflict" description="In Ref. 8." evidence="44" ref="8">
    <original>V</original>
    <variation>A</variation>
    <location>
        <position position="329"/>
    </location>
</feature>
<feature type="sequence conflict" description="In Ref. 5; BAD18684." evidence="44" ref="5">
    <original>M</original>
    <variation>R</variation>
    <location>
        <position position="561"/>
    </location>
</feature>
<feature type="sequence conflict" description="In Ref. 1; AAD30545." evidence="44" ref="1">
    <original>S</original>
    <variation>C</variation>
    <location>
        <position position="678"/>
    </location>
</feature>
<feature type="helix" evidence="48">
    <location>
        <begin position="385"/>
        <end position="387"/>
    </location>
</feature>
<feature type="helix" evidence="48">
    <location>
        <begin position="397"/>
        <end position="426"/>
    </location>
</feature>
<feature type="strand" evidence="48">
    <location>
        <begin position="427"/>
        <end position="429"/>
    </location>
</feature>
<feature type="helix" evidence="48">
    <location>
        <begin position="441"/>
        <end position="469"/>
    </location>
</feature>
<feature type="helix" evidence="48">
    <location>
        <begin position="474"/>
        <end position="504"/>
    </location>
</feature>
<feature type="helix" evidence="48">
    <location>
        <begin position="515"/>
        <end position="534"/>
    </location>
</feature>
<feature type="turn" evidence="48">
    <location>
        <begin position="535"/>
        <end position="537"/>
    </location>
</feature>
<feature type="helix" evidence="48">
    <location>
        <begin position="539"/>
        <end position="541"/>
    </location>
</feature>
<feature type="strand" evidence="48">
    <location>
        <begin position="563"/>
        <end position="565"/>
    </location>
</feature>
<feature type="helix" evidence="48">
    <location>
        <begin position="567"/>
        <end position="573"/>
    </location>
</feature>
<feature type="helix" evidence="48">
    <location>
        <begin position="575"/>
        <end position="596"/>
    </location>
</feature>
<feature type="helix" evidence="48">
    <location>
        <begin position="609"/>
        <end position="619"/>
    </location>
</feature>
<feature type="helix" evidence="48">
    <location>
        <begin position="621"/>
        <end position="630"/>
    </location>
</feature>
<feature type="turn" evidence="48">
    <location>
        <begin position="633"/>
        <end position="635"/>
    </location>
</feature>
<feature type="helix" evidence="48">
    <location>
        <begin position="636"/>
        <end position="648"/>
    </location>
</feature>
<feature type="helix" evidence="48">
    <location>
        <begin position="650"/>
        <end position="661"/>
    </location>
</feature>
<comment type="function">
    <text evidence="1 13 15 19 20 22 28 29 32 34 37">Adhesion G-protein coupled receptor (aGPCR) for steroid hormone 17alpha-hydroxypregnenolone (17-OH), which is involved in cell adhesion and cell-cell interactions (PubMed:39389061). Ligand binding causes a conformation change that triggers signaling via guanine nucleotide-binding proteins (G proteins) and modulates the activity of downstream effectors, such as RhoA pathway (PubMed:28874577, PubMed:35418682, PubMed:39389061). ADGRG1 is coupled to G(12) and/or G(13) G proteins (GNA12 and GNA13, respectively) and mediates the activation Rho small GTPases (PubMed:22238662, PubMed:28424266, PubMed:35418682, PubMed:39389061). Acts as a potent suppressor of ferroptosis: binding to 17-OH-binding initiates signaling that down-regulates CD36 and alleviates ferroptosis-induced liver injury (By similarity). Ligand-binding also induces cell adhesion activity via association with proteins such as collagen III/COL3A1 and TGM2 (By similarity). Mediates cell matrix adhesion in developing neurons and hematopoietic stem cells (By similarity). Involved in cortical development, specifically in maintenance of the pial basement membrane integrity and in cortical lamination: association with COL3A1 in the developing brain inhibits neuronal migration via activation of the RhoA pathway (PubMed:24531968). Together with TGM2, acts as a regulator of myelination and myelin repair in oligodendrocyte precursor cells (By similarity). Acts as a hemostatic sensor of shear force: G protein-coupled receptor signaling is activated in response to shear force in platelets, promoting G(13) G protein signaling, and platelet shape change and aggregation in a COL3A1-dependent manner (PubMed:33097663). Acts as an inhibitor of VEGFA production thereby inhibiting angiogenesis through a signaling pathway mediated by PRKCA (PubMed:16757564, PubMed:19572147, PubMed:21724588). Plays a role in the maintenance of hematopoietic stem cells in bone marrow niche (By similarity). Plays an essential role in testis development (By similarity).</text>
</comment>
<comment type="activity regulation">
    <text evidence="24 34">Forms a heterodimer of 2 chains generated by proteolytic processing that remain associated through non-covalent interactions mediated by the GAIN-B domain (PubMed:35418682). In the inactivated receptor, the Stachel sequence (also named stalk) is embedded in the GAIN-B domain, where it adopts a beta-strand conformation (PubMed:35418682). On activation, the Stachel moves into the 7 transmembrane region and adopts a twisted hook-shaped configuration that forms contacts within the receptor, leading to coupling of a G-alpha protein, which activates signaling (PubMed:35418682). The cleaved GAIN-B and N-terminal domains can then dissociate from the rest of the receptor (PubMed:25918380, PubMed:35418682).</text>
</comment>
<comment type="subunit">
    <text evidence="8 13 16 17 19 21 26 27">Heterodimer of 2 chains generated by proteolytic processing; the large extracellular N-terminal fragment (ADGRG1 NT) and the membrane-bound C-terminal fragment (ADGRG1-CT) predominantly remain associated and non-covalently linked (PubMed:22333914). ADGRG1 NT self-associates in a trans-trans manner; the homophilic interaction enhances receptor signaling (PubMed:21708946). Interacts with TGM2 (PubMed:16757564, PubMed:21349848, PubMed:21724588). Interacts with heparin; leading to the reduction of ADGRG1 shedding (PubMed:27068534). Interacts with COL3A1 (PubMed:28258187). Part of a GPCR-tetraspanin complex at least consisting of ADGRG1, CD81, eventually CD9, and GNA11 in which CD81 is enhancing the association of ADGRG1 with GNA11 (PubMed:15004227).</text>
</comment>
<comment type="subcellular location">
    <subcellularLocation>
        <location evidence="16 23 28">Cell membrane</location>
        <topology evidence="34">Multi-pass membrane protein</topology>
    </subcellularLocation>
</comment>
<comment type="subcellular location">
    <molecule>Adhesion G-protein coupled receptor G1, N-terminal fragment</molecule>
    <subcellularLocation>
        <location evidence="16">Secreted</location>
    </subcellularLocation>
    <text evidence="16 23">Activation of the G protein-coupled receptor and interaction with COL3A1 leads to the release of ADGRG1 NT from the membrane.</text>
</comment>
<comment type="subcellular location">
    <molecule>Adhesion G-protein coupled receptor G1, C-terminal fragment</molecule>
    <subcellularLocation>
        <location evidence="23">Membrane raft</location>
    </subcellularLocation>
    <text evidence="23">Interaction with its ligand COL3A1 leads to the release of ADGRG1 NT from the membrane and triggers the association of ADGRG1 CT with lipid rafts.</text>
</comment>
<comment type="alternative products">
    <event type="alternative splicing"/>
    <isoform>
        <id>Q9Y653-1</id>
        <name>1</name>
        <sequence type="displayed"/>
    </isoform>
    <isoform>
        <id>Q9Y653-2</id>
        <name>2</name>
        <name>S1</name>
        <sequence type="described" ref="VSP_035068"/>
    </isoform>
    <isoform>
        <id>Q9Y653-3</id>
        <name>3</name>
        <name>S2</name>
        <sequence type="described" ref="VSP_047555 VSP_035068"/>
    </isoform>
    <isoform>
        <id>Q9Y653-4</id>
        <name>4</name>
        <name>S3</name>
        <sequence type="described" ref="VSP_047556"/>
    </isoform>
    <isoform>
        <id>Q9Y653-5</id>
        <name>5</name>
        <name>S4</name>
        <sequence type="described" ref="VSP_047554"/>
    </isoform>
</comment>
<comment type="tissue specificity">
    <text evidence="13">Widely distributed with highest levels found in thyroid gland, brain and heart. Expressed in a great number of tumor cells. Expression is down-regulated in different tumors from highly metastatic cells.</text>
</comment>
<comment type="domain">
    <text evidence="34">The Stachel sequence (also named stalk) in the C-terminal part of the extracellular domain (ECD) functions as a tethered agonist (PubMed:35418682). In the inactivated receptor, the Stachel sequence (also named stalk) is embedded in the GAIN-B domain, where it adopts a beta-strand conformation (PubMed:35418682). On activation, the Stachel moves into the 7 transmembrane region and adopts a twisted hook-shaped configuration that forms contacts within the receptor, leading to coupling of a G-alpha protein, which activates signaling (PubMed:35418682).</text>
</comment>
<comment type="PTM">
    <text evidence="21 36">Autoproteolytically cleaved into 2 fragments; the large extracellular N-terminal fragment (ADGRG1 NT) and the membrane-bound C-terminal fragment (ADGRG1 CT) predominantly remain associated and non-covalently linked (PubMed:22333914, PubMed:37673336). Shedding to yield the secreted ADGRG1 N-terminal fragment seems to involve metalloprotease(s) (PubMed:22333914).</text>
</comment>
<comment type="PTM">
    <text evidence="16">N-glycosylated. Contains sialic acid residues.</text>
</comment>
<comment type="PTM">
    <text evidence="17">Ubiquitinated. Undergoes polyubiquitination upon activation.</text>
</comment>
<comment type="disease" evidence="9 12 16 18 20 23 28 30 31 33 35">
    <disease id="DI-01281">
        <name>Cortical dysplasia, complex, with other brain malformations 14A (bilateral frontoparietal)</name>
        <acronym>CDCBM14A</acronym>
        <description>An autosomal recessive disorder characterized by global developmental delay with impaired intellectual development, motor delay, poor speech, cerebellar and pyramidal signs, truncal ataxia, and early-onset seizures. Brain imaging shows bilateral frontoparietal polymicrogyria, a malformation of the cortex in which the brain surface is irregular and characterized by an excessive number of small gyri with abnormal lamination. Polymicrogyria is considered to be the result of postmigratory abnormal cortical organization.</description>
        <dbReference type="MIM" id="606854"/>
    </disease>
    <text>The disease is caused by variants affecting the gene represented in this entry.</text>
</comment>
<comment type="disease" evidence="22">
    <disease id="DI-04104">
        <name>Cortical dysplasia, complex, with other brain malformations 14B (bilateral perisylvian)</name>
        <acronym>CDCBM14B</acronym>
        <description>An autosomal recessive disorder characterized by strikingly restricted polymicrogyria limited to the cortex surrounding the Sylvian fissure. Affected individuals have intellectual and language difficulty and seizures, but no motor disability. Polymicrogyria is a malformation of the cortex in which the brain surface is irregular and characterized by an excessive number of small gyri with abnormal lamination. It is considered to be the result of postmigratory abnormal cortical organization.</description>
        <dbReference type="MIM" id="615752"/>
    </disease>
    <text evidence="22">The disease is caused by variants affecting the gene represented in this entry. Homozygous deletion of 1 of 2 tandem 15-bp repeats located 144 bp upstream of the ADGRG1 non-coding exon 1m transcription start site, results in impaired perisylvian ADGRG1 expression and disruption of perisylvian gyri (PubMed:24531968).</text>
</comment>
<comment type="miscellaneous">
    <molecule>Adhesion G-protein coupled receptor G1, N-terminal fragment</molecule>
    <text evidence="13 19">Plays a critical role in cancer progression by inhibiting VEGFA production thereby inhibiting angiogenesis through a signaling pathway mediated by PRKCA.</text>
</comment>
<comment type="miscellaneous">
    <molecule>Isoform 5</molecule>
    <text evidence="44">Has no predictable signal peptide.</text>
</comment>
<comment type="similarity">
    <text evidence="44">Belongs to the G-protein coupled receptor 2 family. LN-TM7 subfamily.</text>
</comment>
<accession>Q9Y653</accession>
<accession>A6NIT7</accession>
<accession>A6NJV9</accession>
<accession>B0M0K4</accession>
<accession>B4DR54</accession>
<accession>O95966</accession>
<accession>Q6ZMP1</accession>
<accession>Q8NGB3</accession>
<accession>Q96HB4</accession>
<sequence>MTPQSLLQTTLFLLSLLFLVQGAHGRGHREDFRFCSQRNQTHRSSLHYKPTPDLRISIENSEEALTVHAPFPAAHPASRSFPDPRGLYHFCLYWNRHAGRLHLLYGKRDFLLSDKASSLLCFQHQEESLAQGPPLLATSVTSWWSPQNISLPSAASFTFSFHSPPHTAAHNASVDMCELKRDLQLLSQFLKHPQKASRRPSAAPASQQLQSLESKLTSVRFMGDMVSFEEDRINATVWKLQPTAGLQDLHIHSRQEEEQSEIMEYSVLLPRTLFQRTKGRSGEAEKRLLLVDFSSQALFQDKNSSQVLGEKVLGIVVQNTKVANLTEPVVLTFQHQLQPKNVTLQCVFWVEDPTLSSPGHWSSAGCETVRRETQTSCFCNHLTYFAVLMVSSVEVDAVHKHYLSLLSYVGCVVSALACLVTIAAYLCSRVPLPCRRKPRDYTIKVHMNLLLAVFLLDTSFLLSEPVALTGSEAGCRASAIFLHFSLLTCLSWMGLEGYNLYRLVVEVFGTYVPGYLLKLSAMGWGFPIFLVTLVALVDVDNYGPIILAVHRTPEGVIYPSMCWIRDSLVSYITNLGLFSLVFLFNMAMLATMVVQILRLRPHTQKWSHVLTLLGLSLVLGLPWALIFFSFASGTFQLVVLYLFSIITSFQGFLIFIWYWSMRLQARGGPSPLKSNSDSARLPISSGSTSSSRI</sequence>
<gene>
    <name evidence="43 46" type="primary">ADGRG1</name>
    <name evidence="39" type="synonym">GPR56</name>
    <name type="synonym">TM7LN4</name>
    <name evidence="40" type="synonym">TM7XN1</name>
    <name type="ORF">UNQ540/PRO1083</name>
</gene>
<protein>
    <recommendedName>
        <fullName evidence="44">Adhesion G-protein coupled receptor G1</fullName>
    </recommendedName>
    <alternativeName>
        <fullName evidence="39">G-protein coupled receptor 56</fullName>
    </alternativeName>
    <component>
        <recommendedName>
            <fullName>Adhesion G-protein coupled receptor G1, N-terminal fragment</fullName>
        </recommendedName>
        <alternativeName>
            <fullName>ADGRG1 N-terminal fragment</fullName>
            <shortName>ADGRG1 NT</shortName>
        </alternativeName>
        <alternativeName>
            <fullName>GPR56 N-terminal fragment</fullName>
            <shortName>GPR56 NT</shortName>
            <shortName>GPR56(N)</shortName>
        </alternativeName>
        <alternativeName>
            <fullName>GPR56 extracellular subunit</fullName>
        </alternativeName>
        <alternativeName>
            <fullName>GPR56 subunit alpha</fullName>
        </alternativeName>
    </component>
    <component>
        <recommendedName>
            <fullName>Adhesion G-protein coupled receptor G1, C-terminal fragment</fullName>
        </recommendedName>
        <alternativeName>
            <fullName>ADGRG1 C-terminal fragment</fullName>
            <shortName>ADGRG1 CT</shortName>
        </alternativeName>
        <alternativeName>
            <fullName>GPR56 C-terminal fragment</fullName>
            <shortName>GPR56 CT</shortName>
            <shortName>GPR56(C)</shortName>
        </alternativeName>
        <alternativeName>
            <fullName>GPR56 seven-transmembrane subunit</fullName>
            <shortName>GPR56 7TM</shortName>
        </alternativeName>
        <alternativeName>
            <fullName>GPR56 subunit beta</fullName>
        </alternativeName>
    </component>
</protein>
<dbReference type="EMBL" id="AF106858">
    <property type="protein sequence ID" value="AAD30545.1"/>
    <property type="molecule type" value="mRNA"/>
</dbReference>
<dbReference type="EMBL" id="AJ011001">
    <property type="protein sequence ID" value="CAB37294.1"/>
    <property type="molecule type" value="mRNA"/>
</dbReference>
<dbReference type="EMBL" id="EU432119">
    <property type="protein sequence ID" value="ABY87918.1"/>
    <property type="molecule type" value="mRNA"/>
</dbReference>
<dbReference type="EMBL" id="AY358400">
    <property type="protein sequence ID" value="AAQ88766.1"/>
    <property type="molecule type" value="mRNA"/>
</dbReference>
<dbReference type="EMBL" id="AK131550">
    <property type="protein sequence ID" value="BAD18684.1"/>
    <property type="molecule type" value="mRNA"/>
</dbReference>
<dbReference type="EMBL" id="AK299110">
    <property type="protein sequence ID" value="BAG61166.1"/>
    <property type="molecule type" value="mRNA"/>
</dbReference>
<dbReference type="EMBL" id="AB065909">
    <property type="protein sequence ID" value="BAC06124.1"/>
    <property type="molecule type" value="Genomic_DNA"/>
</dbReference>
<dbReference type="EMBL" id="BT007311">
    <property type="protein sequence ID" value="AAP35975.1"/>
    <property type="molecule type" value="mRNA"/>
</dbReference>
<dbReference type="EMBL" id="CR936747">
    <property type="status" value="NOT_ANNOTATED_CDS"/>
    <property type="molecule type" value="mRNA"/>
</dbReference>
<dbReference type="EMBL" id="AC018552">
    <property type="status" value="NOT_ANNOTATED_CDS"/>
    <property type="molecule type" value="Genomic_DNA"/>
</dbReference>
<dbReference type="EMBL" id="CH471092">
    <property type="protein sequence ID" value="EAW82939.1"/>
    <property type="molecule type" value="Genomic_DNA"/>
</dbReference>
<dbReference type="EMBL" id="CH471092">
    <property type="protein sequence ID" value="EAW82940.1"/>
    <property type="molecule type" value="Genomic_DNA"/>
</dbReference>
<dbReference type="EMBL" id="BC008770">
    <property type="protein sequence ID" value="AAH08770.1"/>
    <property type="molecule type" value="mRNA"/>
</dbReference>
<dbReference type="CCDS" id="CCDS32460.1">
    <molecule id="Q9Y653-1"/>
</dbReference>
<dbReference type="CCDS" id="CCDS32461.1">
    <molecule id="Q9Y653-2"/>
</dbReference>
<dbReference type="CCDS" id="CCDS73893.1">
    <molecule id="Q9Y653-3"/>
</dbReference>
<dbReference type="RefSeq" id="NP_001139242.1">
    <molecule id="Q9Y653-2"/>
    <property type="nucleotide sequence ID" value="NM_001145770.3"/>
</dbReference>
<dbReference type="RefSeq" id="NP_001139243.1">
    <molecule id="Q9Y653-1"/>
    <property type="nucleotide sequence ID" value="NM_001145771.3"/>
</dbReference>
<dbReference type="RefSeq" id="NP_001139244.1">
    <molecule id="Q9Y653-2"/>
    <property type="nucleotide sequence ID" value="NM_001145772.3"/>
</dbReference>
<dbReference type="RefSeq" id="NP_001139245.1">
    <molecule id="Q9Y653-3"/>
    <property type="nucleotide sequence ID" value="NM_001145773.3"/>
</dbReference>
<dbReference type="RefSeq" id="NP_001139246.1">
    <molecule id="Q9Y653-2"/>
    <property type="nucleotide sequence ID" value="NM_001145774.3"/>
</dbReference>
<dbReference type="RefSeq" id="NP_001277071.1">
    <molecule id="Q9Y653-4"/>
    <property type="nucleotide sequence ID" value="NM_001290142.2"/>
</dbReference>
<dbReference type="RefSeq" id="NP_001277072.1">
    <molecule id="Q9Y653-5"/>
    <property type="nucleotide sequence ID" value="NM_001290143.2"/>
</dbReference>
<dbReference type="RefSeq" id="NP_001357357.1">
    <molecule id="Q9Y653-1"/>
    <property type="nucleotide sequence ID" value="NM_001370428.1"/>
</dbReference>
<dbReference type="RefSeq" id="NP_001357358.1">
    <molecule id="Q9Y653-1"/>
    <property type="nucleotide sequence ID" value="NM_001370429.1"/>
</dbReference>
<dbReference type="RefSeq" id="NP_001357359.1">
    <molecule id="Q9Y653-1"/>
    <property type="nucleotide sequence ID" value="NM_001370430.1"/>
</dbReference>
<dbReference type="RefSeq" id="NP_001357360.1">
    <molecule id="Q9Y653-1"/>
    <property type="nucleotide sequence ID" value="NM_001370431.1"/>
</dbReference>
<dbReference type="RefSeq" id="NP_001357361.1">
    <molecule id="Q9Y653-1"/>
    <property type="nucleotide sequence ID" value="NM_001370432.1"/>
</dbReference>
<dbReference type="RefSeq" id="NP_001357362.1">
    <molecule id="Q9Y653-3"/>
    <property type="nucleotide sequence ID" value="NM_001370433.1"/>
</dbReference>
<dbReference type="RefSeq" id="NP_001357364.1">
    <molecule id="Q9Y653-2"/>
    <property type="nucleotide sequence ID" value="NM_001370435.1"/>
</dbReference>
<dbReference type="RefSeq" id="NP_001357365.1">
    <molecule id="Q9Y653-2"/>
    <property type="nucleotide sequence ID" value="NM_001370436.1"/>
</dbReference>
<dbReference type="RefSeq" id="NP_001357366.1">
    <molecule id="Q9Y653-2"/>
    <property type="nucleotide sequence ID" value="NM_001370437.1"/>
</dbReference>
<dbReference type="RefSeq" id="NP_001357367.1">
    <molecule id="Q9Y653-2"/>
    <property type="nucleotide sequence ID" value="NM_001370438.1"/>
</dbReference>
<dbReference type="RefSeq" id="NP_001357368.1">
    <molecule id="Q9Y653-2"/>
    <property type="nucleotide sequence ID" value="NM_001370439.1"/>
</dbReference>
<dbReference type="RefSeq" id="NP_001357369.1">
    <molecule id="Q9Y653-2"/>
    <property type="nucleotide sequence ID" value="NM_001370440.1"/>
</dbReference>
<dbReference type="RefSeq" id="NP_005673.3">
    <molecule id="Q9Y653-1"/>
    <property type="nucleotide sequence ID" value="NM_005682.6"/>
</dbReference>
<dbReference type="RefSeq" id="NP_958932.1">
    <molecule id="Q9Y653-2"/>
    <property type="nucleotide sequence ID" value="NM_201524.4"/>
</dbReference>
<dbReference type="RefSeq" id="NP_958933.1">
    <molecule id="Q9Y653-2"/>
    <property type="nucleotide sequence ID" value="NM_201525.4"/>
</dbReference>
<dbReference type="RefSeq" id="XP_005256303.1">
    <molecule id="Q9Y653-1"/>
    <property type="nucleotide sequence ID" value="XM_005256246.3"/>
</dbReference>
<dbReference type="RefSeq" id="XP_005256304.1">
    <property type="nucleotide sequence ID" value="XM_005256247.2"/>
</dbReference>
<dbReference type="RefSeq" id="XP_005256305.1">
    <molecule id="Q9Y653-1"/>
    <property type="nucleotide sequence ID" value="XM_005256248.3"/>
</dbReference>
<dbReference type="RefSeq" id="XP_005256306.1">
    <property type="nucleotide sequence ID" value="XM_005256249.3"/>
</dbReference>
<dbReference type="RefSeq" id="XP_005256308.1">
    <property type="nucleotide sequence ID" value="XM_005256251.4"/>
</dbReference>
<dbReference type="RefSeq" id="XP_005256309.1">
    <molecule id="Q9Y653-1"/>
    <property type="nucleotide sequence ID" value="XM_005256252.3"/>
</dbReference>
<dbReference type="RefSeq" id="XP_005256311.1">
    <molecule id="Q9Y653-1"/>
    <property type="nucleotide sequence ID" value="XM_005256254.3"/>
</dbReference>
<dbReference type="RefSeq" id="XP_005256312.1">
    <molecule id="Q9Y653-2"/>
    <property type="nucleotide sequence ID" value="XM_005256255.3"/>
</dbReference>
<dbReference type="RefSeq" id="XP_006721405.1">
    <molecule id="Q9Y653-1"/>
    <property type="nucleotide sequence ID" value="XM_006721342.3"/>
</dbReference>
<dbReference type="RefSeq" id="XP_006721406.1">
    <property type="nucleotide sequence ID" value="XM_006721343.3"/>
</dbReference>
<dbReference type="RefSeq" id="XP_006721407.1">
    <property type="nucleotide sequence ID" value="XM_006721344.2"/>
</dbReference>
<dbReference type="RefSeq" id="XP_006721408.1">
    <property type="nucleotide sequence ID" value="XM_006721345.3"/>
</dbReference>
<dbReference type="RefSeq" id="XP_006721409.1">
    <property type="nucleotide sequence ID" value="XM_006721346.2"/>
</dbReference>
<dbReference type="RefSeq" id="XP_006721410.1">
    <molecule id="Q9Y653-3"/>
    <property type="nucleotide sequence ID" value="XM_006721347.3"/>
</dbReference>
<dbReference type="RefSeq" id="XP_011521765.1">
    <property type="nucleotide sequence ID" value="XM_011523463.2"/>
</dbReference>
<dbReference type="RefSeq" id="XP_011521766.1">
    <property type="nucleotide sequence ID" value="XM_011523464.2"/>
</dbReference>
<dbReference type="RefSeq" id="XP_011521767.1">
    <property type="nucleotide sequence ID" value="XM_011523465.2"/>
</dbReference>
<dbReference type="RefSeq" id="XP_011521768.1">
    <molecule id="Q9Y653-1"/>
    <property type="nucleotide sequence ID" value="XM_011523466.3"/>
</dbReference>
<dbReference type="RefSeq" id="XP_011521769.1">
    <property type="nucleotide sequence ID" value="XM_011523467.2"/>
</dbReference>
<dbReference type="RefSeq" id="XP_011521770.1">
    <molecule id="Q9Y653-1"/>
    <property type="nucleotide sequence ID" value="XM_011523468.3"/>
</dbReference>
<dbReference type="RefSeq" id="XP_016879381.1">
    <molecule id="Q9Y653-2"/>
    <property type="nucleotide sequence ID" value="XM_017023892.2"/>
</dbReference>
<dbReference type="RefSeq" id="XP_047290863.1">
    <molecule id="Q9Y653-3"/>
    <property type="nucleotide sequence ID" value="XM_047434907.1"/>
</dbReference>
<dbReference type="RefSeq" id="XP_047290864.1">
    <molecule id="Q9Y653-3"/>
    <property type="nucleotide sequence ID" value="XM_047434908.1"/>
</dbReference>
<dbReference type="RefSeq" id="XP_047290865.1">
    <molecule id="Q9Y653-3"/>
    <property type="nucleotide sequence ID" value="XM_047434909.1"/>
</dbReference>
<dbReference type="RefSeq" id="XP_047290866.1">
    <molecule id="Q9Y653-3"/>
    <property type="nucleotide sequence ID" value="XM_047434910.1"/>
</dbReference>
<dbReference type="RefSeq" id="XP_047290867.1">
    <molecule id="Q9Y653-3"/>
    <property type="nucleotide sequence ID" value="XM_047434911.1"/>
</dbReference>
<dbReference type="RefSeq" id="XP_047290868.1">
    <molecule id="Q9Y653-3"/>
    <property type="nucleotide sequence ID" value="XM_047434912.1"/>
</dbReference>
<dbReference type="RefSeq" id="XP_047290869.1">
    <molecule id="Q9Y653-2"/>
    <property type="nucleotide sequence ID" value="XM_047434913.1"/>
</dbReference>
<dbReference type="RefSeq" id="XP_047290870.1">
    <molecule id="Q9Y653-2"/>
    <property type="nucleotide sequence ID" value="XM_047434914.1"/>
</dbReference>
<dbReference type="RefSeq" id="XP_047290871.1">
    <molecule id="Q9Y653-2"/>
    <property type="nucleotide sequence ID" value="XM_047434915.1"/>
</dbReference>
<dbReference type="RefSeq" id="XP_047290872.1">
    <molecule id="Q9Y653-2"/>
    <property type="nucleotide sequence ID" value="XM_047434916.1"/>
</dbReference>
<dbReference type="RefSeq" id="XP_054170370.1">
    <molecule id="Q9Y653-1"/>
    <property type="nucleotide sequence ID" value="XM_054314395.1"/>
</dbReference>
<dbReference type="RefSeq" id="XP_054170371.1">
    <molecule id="Q9Y653-1"/>
    <property type="nucleotide sequence ID" value="XM_054314396.1"/>
</dbReference>
<dbReference type="RefSeq" id="XP_054170372.1">
    <molecule id="Q9Y653-1"/>
    <property type="nucleotide sequence ID" value="XM_054314397.1"/>
</dbReference>
<dbReference type="RefSeq" id="XP_054170373.1">
    <molecule id="Q9Y653-1"/>
    <property type="nucleotide sequence ID" value="XM_054314398.1"/>
</dbReference>
<dbReference type="RefSeq" id="XP_054170374.1">
    <molecule id="Q9Y653-1"/>
    <property type="nucleotide sequence ID" value="XM_054314399.1"/>
</dbReference>
<dbReference type="RefSeq" id="XP_054170375.1">
    <molecule id="Q9Y653-1"/>
    <property type="nucleotide sequence ID" value="XM_054314400.1"/>
</dbReference>
<dbReference type="RefSeq" id="XP_054170376.1">
    <molecule id="Q9Y653-1"/>
    <property type="nucleotide sequence ID" value="XM_054314401.1"/>
</dbReference>
<dbReference type="RefSeq" id="XP_054170377.1">
    <molecule id="Q9Y653-3"/>
    <property type="nucleotide sequence ID" value="XM_054314402.1"/>
</dbReference>
<dbReference type="RefSeq" id="XP_054170378.1">
    <molecule id="Q9Y653-3"/>
    <property type="nucleotide sequence ID" value="XM_054314403.1"/>
</dbReference>
<dbReference type="RefSeq" id="XP_054170379.1">
    <molecule id="Q9Y653-3"/>
    <property type="nucleotide sequence ID" value="XM_054314404.1"/>
</dbReference>
<dbReference type="RefSeq" id="XP_054170380.1">
    <molecule id="Q9Y653-3"/>
    <property type="nucleotide sequence ID" value="XM_054314405.1"/>
</dbReference>
<dbReference type="RefSeq" id="XP_054170381.1">
    <molecule id="Q9Y653-3"/>
    <property type="nucleotide sequence ID" value="XM_054314406.1"/>
</dbReference>
<dbReference type="RefSeq" id="XP_054170382.1">
    <molecule id="Q9Y653-3"/>
    <property type="nucleotide sequence ID" value="XM_054314407.1"/>
</dbReference>
<dbReference type="RefSeq" id="XP_054170383.1">
    <molecule id="Q9Y653-3"/>
    <property type="nucleotide sequence ID" value="XM_054314408.1"/>
</dbReference>
<dbReference type="RefSeq" id="XP_054170384.1">
    <molecule id="Q9Y653-2"/>
    <property type="nucleotide sequence ID" value="XM_054314409.1"/>
</dbReference>
<dbReference type="RefSeq" id="XP_054170385.1">
    <molecule id="Q9Y653-2"/>
    <property type="nucleotide sequence ID" value="XM_054314410.1"/>
</dbReference>
<dbReference type="RefSeq" id="XP_054170386.1">
    <molecule id="Q9Y653-2"/>
    <property type="nucleotide sequence ID" value="XM_054314411.1"/>
</dbReference>
<dbReference type="RefSeq" id="XP_054170387.1">
    <molecule id="Q9Y653-2"/>
    <property type="nucleotide sequence ID" value="XM_054314412.1"/>
</dbReference>
<dbReference type="RefSeq" id="XP_054170388.1">
    <molecule id="Q9Y653-2"/>
    <property type="nucleotide sequence ID" value="XM_054314413.1"/>
</dbReference>
<dbReference type="RefSeq" id="XP_054170389.1">
    <molecule id="Q9Y653-2"/>
    <property type="nucleotide sequence ID" value="XM_054314414.1"/>
</dbReference>
<dbReference type="PDB" id="7SF8">
    <property type="method" value="EM"/>
    <property type="resolution" value="2.70 A"/>
    <property type="chains" value="A=383-693"/>
</dbReference>
<dbReference type="PDBsum" id="7SF8"/>
<dbReference type="EMDB" id="EMD-25077"/>
<dbReference type="SMR" id="Q9Y653"/>
<dbReference type="BioGRID" id="114704">
    <property type="interactions" value="102"/>
</dbReference>
<dbReference type="CORUM" id="Q9Y653"/>
<dbReference type="FunCoup" id="Q9Y653">
    <property type="interactions" value="88"/>
</dbReference>
<dbReference type="IntAct" id="Q9Y653">
    <property type="interactions" value="57"/>
</dbReference>
<dbReference type="MINT" id="Q9Y653"/>
<dbReference type="STRING" id="9606.ENSP00000455215"/>
<dbReference type="ChEMBL" id="CHEMBL4523929"/>
<dbReference type="MEROPS" id="P02.008"/>
<dbReference type="GlyConnect" id="1288">
    <property type="glycosylation" value="5 N-Linked glycans (2 sites)"/>
</dbReference>
<dbReference type="GlyCosmos" id="Q9Y653">
    <property type="glycosylation" value="7 sites, 5 glycans"/>
</dbReference>
<dbReference type="GlyGen" id="Q9Y653">
    <property type="glycosylation" value="9 sites, 29 N-linked glycans (3 sites), 1 O-linked glycan (2 sites)"/>
</dbReference>
<dbReference type="iPTMnet" id="Q9Y653"/>
<dbReference type="PhosphoSitePlus" id="Q9Y653"/>
<dbReference type="SwissPalm" id="Q9Y653"/>
<dbReference type="BioMuta" id="ADGRG1"/>
<dbReference type="DMDM" id="45476992"/>
<dbReference type="jPOST" id="Q9Y653"/>
<dbReference type="MassIVE" id="Q9Y653"/>
<dbReference type="PaxDb" id="9606-ENSP00000455215"/>
<dbReference type="PeptideAtlas" id="Q9Y653"/>
<dbReference type="ProteomicsDB" id="86601">
    <molecule id="Q9Y653-1"/>
</dbReference>
<dbReference type="ProteomicsDB" id="86602">
    <molecule id="Q9Y653-2"/>
</dbReference>
<dbReference type="Pumba" id="Q9Y653"/>
<dbReference type="ABCD" id="Q9Y653">
    <property type="antibodies" value="14 sequenced antibodies"/>
</dbReference>
<dbReference type="Antibodypedia" id="15123">
    <property type="antibodies" value="335 antibodies from 35 providers"/>
</dbReference>
<dbReference type="DNASU" id="9289"/>
<dbReference type="Ensembl" id="ENST00000388813.9">
    <molecule id="Q9Y653-2"/>
    <property type="protein sequence ID" value="ENSP00000373465.5"/>
    <property type="gene ID" value="ENSG00000205336.14"/>
</dbReference>
<dbReference type="Ensembl" id="ENST00000456916.5">
    <molecule id="Q9Y653-3"/>
    <property type="protein sequence ID" value="ENSP00000398034.2"/>
    <property type="gene ID" value="ENSG00000205336.14"/>
</dbReference>
<dbReference type="Ensembl" id="ENST00000540164.6">
    <molecule id="Q9Y653-2"/>
    <property type="protein sequence ID" value="ENSP00000444911.2"/>
    <property type="gene ID" value="ENSG00000205336.14"/>
</dbReference>
<dbReference type="Ensembl" id="ENST00000562558.6">
    <molecule id="Q9Y653-2"/>
    <property type="protein sequence ID" value="ENSP00000456620.1"/>
    <property type="gene ID" value="ENSG00000205336.14"/>
</dbReference>
<dbReference type="Ensembl" id="ENST00000562631.7">
    <molecule id="Q9Y653-2"/>
    <property type="protein sequence ID" value="ENSP00000455351.2"/>
    <property type="gene ID" value="ENSG00000205336.14"/>
</dbReference>
<dbReference type="Ensembl" id="ENST00000565976.6">
    <molecule id="Q9Y653-1"/>
    <property type="protein sequence ID" value="ENSP00000454933.2"/>
    <property type="gene ID" value="ENSG00000205336.14"/>
</dbReference>
<dbReference type="Ensembl" id="ENST00000567835.5">
    <molecule id="Q9Y653-1"/>
    <property type="protein sequence ID" value="ENSP00000456794.1"/>
    <property type="gene ID" value="ENSG00000205336.14"/>
</dbReference>
<dbReference type="Ensembl" id="ENST00000568908.5">
    <molecule id="Q9Y653-2"/>
    <property type="protein sequence ID" value="ENSP00000457456.1"/>
    <property type="gene ID" value="ENSG00000205336.14"/>
</dbReference>
<dbReference type="Ensembl" id="ENST00000568909.5">
    <molecule id="Q9Y653-1"/>
    <property type="protein sequence ID" value="ENSP00000455215.1"/>
    <property type="gene ID" value="ENSG00000205336.14"/>
</dbReference>
<dbReference type="Ensembl" id="ENST00000673126.2">
    <molecule id="Q9Y653-1"/>
    <property type="protein sequence ID" value="ENSP00000500185.2"/>
    <property type="gene ID" value="ENSG00000205336.14"/>
</dbReference>
<dbReference type="GeneID" id="9289"/>
<dbReference type="KEGG" id="hsa:9289"/>
<dbReference type="MANE-Select" id="ENST00000562631.7">
    <molecule id="Q9Y653-2"/>
    <property type="protein sequence ID" value="ENSP00000455351.2"/>
    <property type="RefSeq nucleotide sequence ID" value="NM_201525.4"/>
    <property type="RefSeq protein sequence ID" value="NP_958933.1"/>
</dbReference>
<dbReference type="UCSC" id="uc002emb.3">
    <molecule id="Q9Y653-1"/>
    <property type="organism name" value="human"/>
</dbReference>
<dbReference type="AGR" id="HGNC:4512"/>
<dbReference type="CTD" id="9289"/>
<dbReference type="DisGeNET" id="9289"/>
<dbReference type="GeneCards" id="ADGRG1"/>
<dbReference type="HGNC" id="HGNC:4512">
    <property type="gene designation" value="ADGRG1"/>
</dbReference>
<dbReference type="HPA" id="ENSG00000205336">
    <property type="expression patterns" value="Tissue enhanced (thyroid)"/>
</dbReference>
<dbReference type="MalaCards" id="ADGRG1"/>
<dbReference type="MIM" id="604110">
    <property type="type" value="gene"/>
</dbReference>
<dbReference type="MIM" id="606854">
    <property type="type" value="phenotype"/>
</dbReference>
<dbReference type="MIM" id="615752">
    <property type="type" value="phenotype"/>
</dbReference>
<dbReference type="neXtProt" id="NX_Q9Y653"/>
<dbReference type="OpenTargets" id="ENSG00000205336"/>
<dbReference type="Orphanet" id="101070">
    <property type="disease" value="Bilateral frontoparietal polymicrogyria"/>
</dbReference>
<dbReference type="Orphanet" id="98889">
    <property type="disease" value="Bilateral perisylvian polymicrogyria"/>
</dbReference>
<dbReference type="PharmGKB" id="PA28901"/>
<dbReference type="VEuPathDB" id="HostDB:ENSG00000205336"/>
<dbReference type="eggNOG" id="KOG4193">
    <property type="taxonomic scope" value="Eukaryota"/>
</dbReference>
<dbReference type="GeneTree" id="ENSGT00940000160843"/>
<dbReference type="HOGENOM" id="CLU_002753_3_9_1"/>
<dbReference type="InParanoid" id="Q9Y653"/>
<dbReference type="OMA" id="TYIHRDY"/>
<dbReference type="OrthoDB" id="8951579at2759"/>
<dbReference type="PAN-GO" id="Q9Y653">
    <property type="GO annotations" value="4 GO annotations based on evolutionary models"/>
</dbReference>
<dbReference type="PhylomeDB" id="Q9Y653"/>
<dbReference type="TreeFam" id="TF321769"/>
<dbReference type="PathwayCommons" id="Q9Y653"/>
<dbReference type="SignaLink" id="Q9Y653"/>
<dbReference type="SIGNOR" id="Q9Y653"/>
<dbReference type="BioGRID-ORCS" id="9289">
    <property type="hits" value="26 hits in 1159 CRISPR screens"/>
</dbReference>
<dbReference type="ChiTaRS" id="ADGRG1">
    <property type="organism name" value="human"/>
</dbReference>
<dbReference type="GenomeRNAi" id="9289"/>
<dbReference type="Pharos" id="Q9Y653">
    <property type="development level" value="Tbio"/>
</dbReference>
<dbReference type="PRO" id="PR:Q9Y653"/>
<dbReference type="Proteomes" id="UP000005640">
    <property type="component" value="Chromosome 16"/>
</dbReference>
<dbReference type="RNAct" id="Q9Y653">
    <property type="molecule type" value="protein"/>
</dbReference>
<dbReference type="Bgee" id="ENSG00000205336">
    <property type="expression patterns" value="Expressed in granulocyte and 201 other cell types or tissues"/>
</dbReference>
<dbReference type="ExpressionAtlas" id="Q9Y653">
    <property type="expression patterns" value="baseline and differential"/>
</dbReference>
<dbReference type="GO" id="GO:0070062">
    <property type="term" value="C:extracellular exosome"/>
    <property type="evidence" value="ECO:0007005"/>
    <property type="project" value="UniProtKB"/>
</dbReference>
<dbReference type="GO" id="GO:0097451">
    <property type="term" value="C:glial limiting end-foot"/>
    <property type="evidence" value="ECO:0000250"/>
    <property type="project" value="UniProtKB"/>
</dbReference>
<dbReference type="GO" id="GO:0016020">
    <property type="term" value="C:membrane"/>
    <property type="evidence" value="ECO:0000304"/>
    <property type="project" value="GDB"/>
</dbReference>
<dbReference type="GO" id="GO:0045121">
    <property type="term" value="C:membrane raft"/>
    <property type="evidence" value="ECO:0007669"/>
    <property type="project" value="UniProtKB-SubCell"/>
</dbReference>
<dbReference type="GO" id="GO:0005886">
    <property type="term" value="C:plasma membrane"/>
    <property type="evidence" value="ECO:0000314"/>
    <property type="project" value="UniProtKB"/>
</dbReference>
<dbReference type="GO" id="GO:0005518">
    <property type="term" value="F:collagen binding"/>
    <property type="evidence" value="ECO:0000250"/>
    <property type="project" value="UniProtKB"/>
</dbReference>
<dbReference type="GO" id="GO:0050840">
    <property type="term" value="F:extracellular matrix binding"/>
    <property type="evidence" value="ECO:0000250"/>
    <property type="project" value="UniProtKB"/>
</dbReference>
<dbReference type="GO" id="GO:0004930">
    <property type="term" value="F:G protein-coupled receptor activity"/>
    <property type="evidence" value="ECO:0000314"/>
    <property type="project" value="UniProtKB"/>
</dbReference>
<dbReference type="GO" id="GO:0008201">
    <property type="term" value="F:heparin binding"/>
    <property type="evidence" value="ECO:0000314"/>
    <property type="project" value="UniProtKB"/>
</dbReference>
<dbReference type="GO" id="GO:0007189">
    <property type="term" value="P:adenylate cyclase-activating G protein-coupled receptor signaling pathway"/>
    <property type="evidence" value="ECO:0000318"/>
    <property type="project" value="GO_Central"/>
</dbReference>
<dbReference type="GO" id="GO:0001525">
    <property type="term" value="P:angiogenesis"/>
    <property type="evidence" value="ECO:0000314"/>
    <property type="project" value="UniProtKB"/>
</dbReference>
<dbReference type="GO" id="GO:0007420">
    <property type="term" value="P:brain development"/>
    <property type="evidence" value="ECO:0000315"/>
    <property type="project" value="GDB"/>
</dbReference>
<dbReference type="GO" id="GO:0007155">
    <property type="term" value="P:cell adhesion"/>
    <property type="evidence" value="ECO:0000314"/>
    <property type="project" value="UniProtKB"/>
</dbReference>
<dbReference type="GO" id="GO:0016477">
    <property type="term" value="P:cell migration"/>
    <property type="evidence" value="ECO:0000314"/>
    <property type="project" value="UniProtKB"/>
</dbReference>
<dbReference type="GO" id="GO:0007166">
    <property type="term" value="P:cell surface receptor signaling pathway"/>
    <property type="evidence" value="ECO:0007669"/>
    <property type="project" value="InterPro"/>
</dbReference>
<dbReference type="GO" id="GO:0007267">
    <property type="term" value="P:cell-cell signaling"/>
    <property type="evidence" value="ECO:0000304"/>
    <property type="project" value="ProtInc"/>
</dbReference>
<dbReference type="GO" id="GO:0021801">
    <property type="term" value="P:cerebral cortex radial glia-guided migration"/>
    <property type="evidence" value="ECO:0000250"/>
    <property type="project" value="UniProtKB"/>
</dbReference>
<dbReference type="GO" id="GO:0021796">
    <property type="term" value="P:cerebral cortex regionalization"/>
    <property type="evidence" value="ECO:0007669"/>
    <property type="project" value="Ensembl"/>
</dbReference>
<dbReference type="GO" id="GO:0007186">
    <property type="term" value="P:G protein-coupled receptor signaling pathway"/>
    <property type="evidence" value="ECO:0000304"/>
    <property type="project" value="ProtInc"/>
</dbReference>
<dbReference type="GO" id="GO:0061484">
    <property type="term" value="P:hematopoietic stem cell homeostasis"/>
    <property type="evidence" value="ECO:0007669"/>
    <property type="project" value="Ensembl"/>
</dbReference>
<dbReference type="GO" id="GO:0021819">
    <property type="term" value="P:layer formation in cerebral cortex"/>
    <property type="evidence" value="ECO:0000250"/>
    <property type="project" value="UniProtKB"/>
</dbReference>
<dbReference type="GO" id="GO:0008285">
    <property type="term" value="P:negative regulation of cell population proliferation"/>
    <property type="evidence" value="ECO:0000314"/>
    <property type="project" value="UniProtKB"/>
</dbReference>
<dbReference type="GO" id="GO:0110076">
    <property type="term" value="P:negative regulation of ferroptosis"/>
    <property type="evidence" value="ECO:0000250"/>
    <property type="project" value="UniProtKB"/>
</dbReference>
<dbReference type="GO" id="GO:2001223">
    <property type="term" value="P:negative regulation of neuron migration"/>
    <property type="evidence" value="ECO:0000250"/>
    <property type="project" value="UniProtKB"/>
</dbReference>
<dbReference type="GO" id="GO:0061351">
    <property type="term" value="P:neural precursor cell proliferation"/>
    <property type="evidence" value="ECO:0007669"/>
    <property type="project" value="Ensembl"/>
</dbReference>
<dbReference type="GO" id="GO:0007200">
    <property type="term" value="P:phospholipase C-activating G protein-coupled receptor signaling pathway"/>
    <property type="evidence" value="ECO:0000314"/>
    <property type="project" value="UniProtKB"/>
</dbReference>
<dbReference type="GO" id="GO:0045785">
    <property type="term" value="P:positive regulation of cell adhesion"/>
    <property type="evidence" value="ECO:0000314"/>
    <property type="project" value="UniProtKB"/>
</dbReference>
<dbReference type="GO" id="GO:2000179">
    <property type="term" value="P:positive regulation of neural precursor cell proliferation"/>
    <property type="evidence" value="ECO:0007669"/>
    <property type="project" value="Ensembl"/>
</dbReference>
<dbReference type="GO" id="GO:0035025">
    <property type="term" value="P:positive regulation of Rho protein signal transduction"/>
    <property type="evidence" value="ECO:0000250"/>
    <property type="project" value="UniProtKB"/>
</dbReference>
<dbReference type="GO" id="GO:1900748">
    <property type="term" value="P:positive regulation of vascular endothelial growth factor signaling pathway"/>
    <property type="evidence" value="ECO:0000314"/>
    <property type="project" value="UniProtKB"/>
</dbReference>
<dbReference type="GO" id="GO:0090330">
    <property type="term" value="P:regulation of platelet aggregation"/>
    <property type="evidence" value="ECO:0000314"/>
    <property type="project" value="UniProtKB"/>
</dbReference>
<dbReference type="GO" id="GO:0007266">
    <property type="term" value="P:Rho protein signal transduction"/>
    <property type="evidence" value="ECO:0000314"/>
    <property type="project" value="UniProtKB"/>
</dbReference>
<dbReference type="GO" id="GO:0160221">
    <property type="term" value="P:Rho-activating G protein-coupled receptor signaling pathway"/>
    <property type="evidence" value="ECO:0000314"/>
    <property type="project" value="UniProtKB"/>
</dbReference>
<dbReference type="GO" id="GO:0072520">
    <property type="term" value="P:seminiferous tubule development"/>
    <property type="evidence" value="ECO:0007669"/>
    <property type="project" value="Ensembl"/>
</dbReference>
<dbReference type="FunFam" id="2.60.220.50:FF:000014">
    <property type="entry name" value="Adhesion G-protein coupled receptor G1"/>
    <property type="match status" value="1"/>
</dbReference>
<dbReference type="FunFam" id="1.20.1070.10:FF:000117">
    <property type="entry name" value="adhesion G-protein coupled receptor G1"/>
    <property type="match status" value="1"/>
</dbReference>
<dbReference type="Gene3D" id="2.60.220.50">
    <property type="match status" value="1"/>
</dbReference>
<dbReference type="Gene3D" id="1.20.1070.10">
    <property type="entry name" value="Rhodopsin 7-helix transmembrane proteins"/>
    <property type="match status" value="1"/>
</dbReference>
<dbReference type="InterPro" id="IPR040950">
    <property type="entry name" value="ADGRG1_GAIN_A"/>
</dbReference>
<dbReference type="InterPro" id="IPR057244">
    <property type="entry name" value="GAIN_B"/>
</dbReference>
<dbReference type="InterPro" id="IPR046338">
    <property type="entry name" value="GAIN_dom_sf"/>
</dbReference>
<dbReference type="InterPro" id="IPR017981">
    <property type="entry name" value="GPCR_2-like_7TM"/>
</dbReference>
<dbReference type="InterPro" id="IPR000832">
    <property type="entry name" value="GPCR_2_secretin-like"/>
</dbReference>
<dbReference type="InterPro" id="IPR003910">
    <property type="entry name" value="GPR1/GPR3/GPR5"/>
</dbReference>
<dbReference type="InterPro" id="IPR000203">
    <property type="entry name" value="GPS"/>
</dbReference>
<dbReference type="InterPro" id="IPR040679">
    <property type="entry name" value="PLL"/>
</dbReference>
<dbReference type="PANTHER" id="PTHR12011">
    <property type="entry name" value="ADHESION G-PROTEIN COUPLED RECEPTOR"/>
    <property type="match status" value="1"/>
</dbReference>
<dbReference type="PANTHER" id="PTHR12011:SF318">
    <property type="entry name" value="ADHESION G-PROTEIN COUPLED RECEPTOR G1"/>
    <property type="match status" value="1"/>
</dbReference>
<dbReference type="Pfam" id="PF00002">
    <property type="entry name" value="7tm_2"/>
    <property type="match status" value="1"/>
</dbReference>
<dbReference type="Pfam" id="PF18619">
    <property type="entry name" value="GAIN_A"/>
    <property type="match status" value="1"/>
</dbReference>
<dbReference type="Pfam" id="PF01825">
    <property type="entry name" value="GPS"/>
    <property type="match status" value="1"/>
</dbReference>
<dbReference type="Pfam" id="PF18587">
    <property type="entry name" value="PLL"/>
    <property type="match status" value="1"/>
</dbReference>
<dbReference type="PRINTS" id="PR00249">
    <property type="entry name" value="GPCRSECRETIN"/>
</dbReference>
<dbReference type="PRINTS" id="PR01422">
    <property type="entry name" value="GPR56ORPHANR"/>
</dbReference>
<dbReference type="SMART" id="SM00303">
    <property type="entry name" value="GPS"/>
    <property type="match status" value="1"/>
</dbReference>
<dbReference type="PROSITE" id="PS50261">
    <property type="entry name" value="G_PROTEIN_RECEP_F2_4"/>
    <property type="match status" value="1"/>
</dbReference>
<dbReference type="PROSITE" id="PS50221">
    <property type="entry name" value="GAIN_B"/>
    <property type="match status" value="1"/>
</dbReference>
<name>AGRG1_HUMAN</name>